<evidence type="ECO:0000250" key="1">
    <source>
        <dbReference type="UniProtKB" id="O11457"/>
    </source>
</evidence>
<evidence type="ECO:0000250" key="2">
    <source>
        <dbReference type="UniProtKB" id="Q66814"/>
    </source>
</evidence>
<evidence type="ECO:0000255" key="3"/>
<evidence type="ECO:0000256" key="4">
    <source>
        <dbReference type="SAM" id="MobiDB-lite"/>
    </source>
</evidence>
<evidence type="ECO:0000269" key="5">
    <source>
    </source>
</evidence>
<evidence type="ECO:0000269" key="6">
    <source>
    </source>
</evidence>
<evidence type="ECO:0000269" key="7">
    <source>
    </source>
</evidence>
<evidence type="ECO:0000269" key="8">
    <source>
    </source>
</evidence>
<evidence type="ECO:0000269" key="9">
    <source>
    </source>
</evidence>
<evidence type="ECO:0000269" key="10">
    <source>
    </source>
</evidence>
<evidence type="ECO:0000269" key="11">
    <source>
    </source>
</evidence>
<evidence type="ECO:0000269" key="12">
    <source>
    </source>
</evidence>
<evidence type="ECO:0000269" key="13">
    <source>
    </source>
</evidence>
<evidence type="ECO:0000269" key="14">
    <source>
    </source>
</evidence>
<evidence type="ECO:0000269" key="15">
    <source>
    </source>
</evidence>
<evidence type="ECO:0000269" key="16">
    <source>
    </source>
</evidence>
<evidence type="ECO:0000269" key="17">
    <source>
    </source>
</evidence>
<evidence type="ECO:0000269" key="18">
    <source>
    </source>
</evidence>
<evidence type="ECO:0000269" key="19">
    <source>
    </source>
</evidence>
<evidence type="ECO:0000269" key="20">
    <source>
    </source>
</evidence>
<evidence type="ECO:0000269" key="21">
    <source>
    </source>
</evidence>
<evidence type="ECO:0000269" key="22">
    <source>
    </source>
</evidence>
<evidence type="ECO:0000269" key="23">
    <source>
    </source>
</evidence>
<evidence type="ECO:0000269" key="24">
    <source>
    </source>
</evidence>
<evidence type="ECO:0000269" key="25">
    <source>
    </source>
</evidence>
<evidence type="ECO:0000269" key="26">
    <source>
    </source>
</evidence>
<evidence type="ECO:0000269" key="27">
    <source>
    </source>
</evidence>
<evidence type="ECO:0000269" key="28">
    <source>
    </source>
</evidence>
<evidence type="ECO:0000269" key="29">
    <source>
    </source>
</evidence>
<evidence type="ECO:0000269" key="30">
    <source>
    </source>
</evidence>
<evidence type="ECO:0000269" key="31">
    <source>
    </source>
</evidence>
<evidence type="ECO:0000269" key="32">
    <source>
    </source>
</evidence>
<evidence type="ECO:0000269" key="33">
    <source>
    </source>
</evidence>
<evidence type="ECO:0000269" key="34">
    <source>
    </source>
</evidence>
<evidence type="ECO:0000269" key="35">
    <source>
    </source>
</evidence>
<evidence type="ECO:0000269" key="36">
    <source>
    </source>
</evidence>
<evidence type="ECO:0000269" key="37">
    <source>
    </source>
</evidence>
<evidence type="ECO:0000269" key="38">
    <source>
    </source>
</evidence>
<evidence type="ECO:0000269" key="39">
    <source>
    </source>
</evidence>
<evidence type="ECO:0000305" key="40"/>
<evidence type="ECO:0000305" key="41">
    <source>
    </source>
</evidence>
<evidence type="ECO:0000305" key="42">
    <source>
    </source>
</evidence>
<evidence type="ECO:0007744" key="43">
    <source>
        <dbReference type="PDB" id="7SWD"/>
    </source>
</evidence>
<evidence type="ECO:0007829" key="44">
    <source>
        <dbReference type="PDB" id="2EBO"/>
    </source>
</evidence>
<evidence type="ECO:0007829" key="45">
    <source>
        <dbReference type="PDB" id="6HS4"/>
    </source>
</evidence>
<evidence type="ECO:0007829" key="46">
    <source>
        <dbReference type="PDB" id="6QD7"/>
    </source>
</evidence>
<evidence type="ECO:0007829" key="47">
    <source>
        <dbReference type="PDB" id="7JPI"/>
    </source>
</evidence>
<evidence type="ECO:0007829" key="48">
    <source>
        <dbReference type="PDB" id="7LYD"/>
    </source>
</evidence>
<evidence type="ECO:0007829" key="49">
    <source>
        <dbReference type="PDB" id="7TN9"/>
    </source>
</evidence>
<evidence type="ECO:0007829" key="50">
    <source>
        <dbReference type="PDB" id="8DPM"/>
    </source>
</evidence>
<evidence type="ECO:0007829" key="51">
    <source>
        <dbReference type="PDB" id="9BSV"/>
    </source>
</evidence>
<keyword id="KW-0002">3D-structure</keyword>
<keyword id="KW-1165">Clathrin-mediated endocytosis of virus by host</keyword>
<keyword id="KW-0165">Cleavage on pair of basic residues</keyword>
<keyword id="KW-0175">Coiled coil</keyword>
<keyword id="KW-1015">Disulfide bond</keyword>
<keyword id="KW-1170">Fusion of virus membrane with host endosomal membrane</keyword>
<keyword id="KW-1168">Fusion of virus membrane with host membrane</keyword>
<keyword id="KW-0325">Glycoprotein</keyword>
<keyword id="KW-1032">Host cell membrane</keyword>
<keyword id="KW-1043">Host membrane</keyword>
<keyword id="KW-0945">Host-virus interaction</keyword>
<keyword id="KW-1090">Inhibition of host innate immune response by virus</keyword>
<keyword id="KW-1084">Inhibition of host tetherin by virus</keyword>
<keyword id="KW-0449">Lipoprotein</keyword>
<keyword id="KW-0472">Membrane</keyword>
<keyword id="KW-0564">Palmitate</keyword>
<keyword id="KW-1185">Reference proteome</keyword>
<keyword id="KW-0691">RNA editing</keyword>
<keyword id="KW-0964">Secreted</keyword>
<keyword id="KW-0732">Signal</keyword>
<keyword id="KW-0812">Transmembrane</keyword>
<keyword id="KW-1133">Transmembrane helix</keyword>
<keyword id="KW-1161">Viral attachment to host cell</keyword>
<keyword id="KW-1234">Viral attachment to host entry receptor</keyword>
<keyword id="KW-0261">Viral envelope protein</keyword>
<keyword id="KW-0899">Viral immunoevasion</keyword>
<keyword id="KW-1162">Viral penetration into host cytoplasm</keyword>
<keyword id="KW-0946">Virion</keyword>
<keyword id="KW-1164">Virus endocytosis by host</keyword>
<keyword id="KW-1160">Virus entry into host cell</keyword>
<organismHost>
    <name type="scientific">Epomops franqueti</name>
    <name type="common">Franquet's epauletted fruit bat</name>
    <name type="synonym">Epomophorus franqueti</name>
    <dbReference type="NCBI Taxonomy" id="77231"/>
</organismHost>
<organismHost>
    <name type="scientific">Homo sapiens</name>
    <name type="common">Human</name>
    <dbReference type="NCBI Taxonomy" id="9606"/>
</organismHost>
<organismHost>
    <name type="scientific">Myonycteris torquata</name>
    <name type="common">Little collared fruit bat</name>
    <dbReference type="NCBI Taxonomy" id="77243"/>
</organismHost>
<proteinExistence type="evidence at protein level"/>
<feature type="signal peptide" evidence="3">
    <location>
        <begin position="1"/>
        <end position="32"/>
    </location>
</feature>
<feature type="chain" id="PRO_0000037485" description="Envelope glycoprotein">
    <location>
        <begin position="33"/>
        <end position="676"/>
    </location>
</feature>
<feature type="chain" id="PRO_0000445686" description="Shed GP">
    <location>
        <begin position="33"/>
        <end position="637"/>
    </location>
</feature>
<feature type="chain" id="PRO_0000037486" description="GP1">
    <location>
        <begin position="33"/>
        <end position="501"/>
    </location>
</feature>
<feature type="chain" id="PRO_0000037487" description="GP2">
    <location>
        <begin position="502"/>
        <end position="676"/>
    </location>
</feature>
<feature type="topological domain" description="Extracellular" evidence="3">
    <location>
        <begin position="33"/>
        <end position="650"/>
    </location>
</feature>
<feature type="transmembrane region" description="Helical" evidence="3">
    <location>
        <begin position="651"/>
        <end position="671"/>
    </location>
</feature>
<feature type="topological domain" description="Cytoplasmic" evidence="3">
    <location>
        <begin position="672"/>
        <end position="676"/>
    </location>
</feature>
<feature type="region of interest" description="Receptor-binding" evidence="3">
    <location>
        <begin position="54"/>
        <end position="201"/>
    </location>
</feature>
<feature type="region of interest" description="Mucin-like region">
    <location>
        <begin position="305"/>
        <end position="485"/>
    </location>
</feature>
<feature type="region of interest" description="Disordered" evidence="4">
    <location>
        <begin position="315"/>
        <end position="337"/>
    </location>
</feature>
<feature type="region of interest" description="Disordered" evidence="4">
    <location>
        <begin position="373"/>
        <end position="392"/>
    </location>
</feature>
<feature type="region of interest" description="Disordered" evidence="4">
    <location>
        <begin position="402"/>
        <end position="479"/>
    </location>
</feature>
<feature type="region of interest" description="Fusion peptide" evidence="40">
    <location>
        <begin position="524"/>
        <end position="539"/>
    </location>
</feature>
<feature type="coiled-coil region" evidence="3">
    <location>
        <begin position="554"/>
        <end position="595"/>
    </location>
</feature>
<feature type="coiled-coil region" evidence="3">
    <location>
        <begin position="615"/>
        <end position="634"/>
    </location>
</feature>
<feature type="short sequence motif" description="Important role for host BST2/tetherin antagonism" evidence="27">
    <location>
        <begin position="660"/>
        <end position="664"/>
    </location>
</feature>
<feature type="compositionally biased region" description="Polar residues" evidence="4">
    <location>
        <begin position="315"/>
        <end position="335"/>
    </location>
</feature>
<feature type="compositionally biased region" description="Polar residues" evidence="4">
    <location>
        <begin position="373"/>
        <end position="391"/>
    </location>
</feature>
<feature type="compositionally biased region" description="Low complexity" evidence="4">
    <location>
        <begin position="414"/>
        <end position="432"/>
    </location>
</feature>
<feature type="compositionally biased region" description="Polar residues" evidence="4">
    <location>
        <begin position="433"/>
        <end position="464"/>
    </location>
</feature>
<feature type="site" description="Involved in receptor recognition and/or post-binding events" evidence="3">
    <location>
        <position position="57"/>
    </location>
</feature>
<feature type="site" description="Involved in receptor recognition and/or post-binding events" evidence="3">
    <location>
        <position position="63"/>
    </location>
</feature>
<feature type="site" description="Involved in receptor recognition and/or post-binding events" evidence="3">
    <location>
        <position position="64"/>
    </location>
</feature>
<feature type="site" description="Involved in receptor recognition and/or post-binding events" evidence="3">
    <location>
        <position position="88"/>
    </location>
</feature>
<feature type="site" description="Involved in receptor recognition and/or post-binding events" evidence="3">
    <location>
        <position position="95"/>
    </location>
</feature>
<feature type="site" description="Involved in receptor recognition and/or post-binding events" evidence="3">
    <location>
        <position position="170"/>
    </location>
</feature>
<feature type="site" description="Cleavage; by host furin" evidence="37">
    <location>
        <begin position="501"/>
        <end position="502"/>
    </location>
</feature>
<feature type="site" description="Cleavage; by host ADAM17" evidence="15">
    <location>
        <begin position="637"/>
        <end position="638"/>
    </location>
</feature>
<feature type="lipid moiety-binding region" description="S-palmitoyl cysteine; by host" evidence="7">
    <location>
        <position position="670"/>
    </location>
</feature>
<feature type="lipid moiety-binding region" description="S-palmitoyl cysteine; by host" evidence="7">
    <location>
        <position position="672"/>
    </location>
</feature>
<feature type="glycosylation site" description="N-linked (GlcNAc...) asparagine; by host" evidence="3">
    <location>
        <position position="40"/>
    </location>
</feature>
<feature type="glycosylation site" description="N-linked (GlcNAc...) asparagine; by host" evidence="3">
    <location>
        <position position="204"/>
    </location>
</feature>
<feature type="glycosylation site" description="N-linked (GlcNAc...) asparagine; by host" evidence="3">
    <location>
        <position position="228"/>
    </location>
</feature>
<feature type="glycosylation site" description="N-linked (GlcNAc...) asparagine; by host" evidence="3">
    <location>
        <position position="238"/>
    </location>
</feature>
<feature type="glycosylation site" description="N-linked (GlcNAc...) asparagine; by host" evidence="3">
    <location>
        <position position="257"/>
    </location>
</feature>
<feature type="glycosylation site" description="N-linked (GlcNAc...) asparagine; by host" evidence="3">
    <location>
        <position position="268"/>
    </location>
</feature>
<feature type="glycosylation site" description="N-linked (GlcNAc...) asparagine; by host" evidence="3">
    <location>
        <position position="296"/>
    </location>
</feature>
<feature type="glycosylation site" description="N-linked (GlcNAc...) asparagine; by host" evidence="3">
    <location>
        <position position="317"/>
    </location>
</feature>
<feature type="glycosylation site" description="N-linked (GlcNAc...) asparagine; by host" evidence="3">
    <location>
        <position position="333"/>
    </location>
</feature>
<feature type="glycosylation site" description="N-linked (GlcNAc...) asparagine; by host" evidence="3">
    <location>
        <position position="346"/>
    </location>
</feature>
<feature type="glycosylation site" description="N-linked (GlcNAc...) asparagine; by host" evidence="3">
    <location>
        <position position="386"/>
    </location>
</feature>
<feature type="glycosylation site" description="N-linked (GlcNAc...) asparagine; by host" evidence="3">
    <location>
        <position position="413"/>
    </location>
</feature>
<feature type="glycosylation site" description="N-linked (GlcNAc...) asparagine; by host" evidence="3">
    <location>
        <position position="436"/>
    </location>
</feature>
<feature type="glycosylation site" description="N-linked (GlcNAc...) asparagine; by host" evidence="3">
    <location>
        <position position="454"/>
    </location>
</feature>
<feature type="glycosylation site" description="N-linked (GlcNAc...) asparagine; by host" evidence="3">
    <location>
        <position position="462"/>
    </location>
</feature>
<feature type="glycosylation site" description="N-linked (GlcNAc...) asparagine; by host" evidence="3">
    <location>
        <position position="563"/>
    </location>
</feature>
<feature type="glycosylation site" description="N-linked (GlcNAc...) asparagine; by host" evidence="3">
    <location>
        <position position="618"/>
    </location>
</feature>
<feature type="disulfide bond" description="Interchain (between GP1 and GP2 chains)" evidence="12">
    <location>
        <begin position="53"/>
        <end position="609"/>
    </location>
</feature>
<feature type="disulfide bond" evidence="3">
    <location>
        <begin position="108"/>
        <end position="135"/>
    </location>
</feature>
<feature type="disulfide bond" evidence="3">
    <location>
        <begin position="121"/>
        <end position="147"/>
    </location>
</feature>
<feature type="disulfide bond" evidence="3">
    <location>
        <begin position="511"/>
        <end position="556"/>
    </location>
</feature>
<feature type="disulfide bond" evidence="12">
    <location>
        <begin position="601"/>
        <end position="608"/>
    </location>
</feature>
<feature type="sequence variant" description="In strain: Isolate mouse-adapted.">
    <original>S</original>
    <variation>P</variation>
    <location>
        <position position="65"/>
    </location>
</feature>
<feature type="sequence variant" description="In strain: Isolate mouse-adapted.">
    <original>S</original>
    <variation>P</variation>
    <location>
        <position position="246"/>
    </location>
</feature>
<feature type="sequence variant">
    <original>I</original>
    <variation>T</variation>
    <location>
        <position position="544"/>
    </location>
</feature>
<feature type="mutagenesis site" description="Induces GP1 secretion. Complete loss of virus capability to enter into host cell." evidence="12">
    <original>N</original>
    <variation>D</variation>
    <location>
        <position position="40"/>
    </location>
</feature>
<feature type="mutagenesis site" description="Induces GP1 secretion. Complete loss of virus capability to enter into host cell." evidence="12">
    <original>C</original>
    <variation>G</variation>
    <location>
        <position position="53"/>
    </location>
</feature>
<feature type="mutagenesis site" description="80% loss of virus capability to enter into host cell.">
    <original>D</original>
    <variation>A</variation>
    <location>
        <position position="55"/>
    </location>
</feature>
<feature type="mutagenesis site" description="No effect on viral entry.">
    <original>D</original>
    <variation>E</variation>
    <variation>K</variation>
    <location>
        <position position="55"/>
    </location>
</feature>
<feature type="mutagenesis site" description="Complete loss of virus capability to enter into host cell.">
    <original>L</original>
    <variation>A</variation>
    <location>
        <position position="57"/>
    </location>
</feature>
<feature type="mutagenesis site" description="90% loss of virus capability to enter into host cell.">
    <original>L</original>
    <variation>F</variation>
    <variation>I</variation>
    <variation>K</variation>
    <location>
        <position position="57"/>
    </location>
</feature>
<feature type="mutagenesis site" description="90% loss of virus capability to enter into host cell.">
    <original>L</original>
    <variation>A</variation>
    <location>
        <position position="63"/>
    </location>
</feature>
<feature type="mutagenesis site" description="Almost complete loss of virus capability to enter into host cell.">
    <original>L</original>
    <variation>F</variation>
    <location>
        <position position="63"/>
    </location>
</feature>
<feature type="mutagenesis site" description="Complete loss of virus capability to enter into host cell.">
    <original>L</original>
    <variation>K</variation>
    <location>
        <position position="63"/>
    </location>
</feature>
<feature type="mutagenesis site" description="Complete loss of virus capability to enter into host cell.">
    <original>R</original>
    <variation>A</variation>
    <variation>E</variation>
    <location>
        <position position="64"/>
    </location>
</feature>
<feature type="mutagenesis site" description="No loss of virus capability to enter into host cell.">
    <original>R</original>
    <variation>K</variation>
    <location>
        <position position="64"/>
    </location>
</feature>
<feature type="mutagenesis site" description="Complete loss of virus capability to enter into host cell.">
    <original>F</original>
    <variation>A</variation>
    <variation>E</variation>
    <location>
        <position position="88"/>
    </location>
</feature>
<feature type="mutagenesis site" description="About 50% loss of ability to counteract host BST2." evidence="27">
    <original>F</original>
    <variation>A</variation>
    <location>
        <position position="88"/>
    </location>
</feature>
<feature type="mutagenesis site" description="No loss of virus capability to enter into host cell.">
    <original>F</original>
    <variation>I</variation>
    <location>
        <position position="88"/>
    </location>
</feature>
<feature type="mutagenesis site" description="80% loss of virus capability to enter into host cell.">
    <original>K</original>
    <variation>A</variation>
    <variation>E</variation>
    <location>
        <position position="95"/>
    </location>
</feature>
<feature type="mutagenesis site" description="20% loss of virus capability to enter into host cell.">
    <original>K</original>
    <variation>R</variation>
    <location>
        <position position="95"/>
    </location>
</feature>
<feature type="mutagenesis site" description="Almost complete loss of expression of GP1 and GP2. Almost complete loss of virus capability to enter into host cell." evidence="12">
    <original>C</original>
    <variation>G</variation>
    <location>
        <position position="108"/>
    </location>
</feature>
<feature type="mutagenesis site" description="About 60% loss of ability to counteract host BST2." evidence="27">
    <original>L</original>
    <variation>A</variation>
    <location>
        <position position="111"/>
    </location>
</feature>
<feature type="mutagenesis site" description="Reduced levels of expression of GP1 and GP2. 50% loss of virus capability to enter into host cell." evidence="12">
    <original>C</original>
    <variation>G</variation>
    <location>
        <position position="121"/>
    </location>
</feature>
<feature type="mutagenesis site" description="About 60% loss of ability to counteract host BST2." evidence="27">
    <original>L</original>
    <variation>A</variation>
    <location>
        <position position="122"/>
    </location>
</feature>
<feature type="mutagenesis site" description="Almost complete loss of expression of GP1 and GP2. Complete loss of virus capability to enter into host cell." evidence="12">
    <original>C</original>
    <variation>S</variation>
    <location>
        <position position="135"/>
    </location>
</feature>
<feature type="mutagenesis site" description="Reduced levels of expression of GP1 and GP2. Almost complete loss of virus capability to enter into host cell." evidence="12">
    <original>C</original>
    <variation>S</variation>
    <location>
        <position position="147"/>
    </location>
</feature>
<feature type="mutagenesis site" description="90% loss of virus capability to enter into host cell.">
    <original>I</original>
    <variation>A</variation>
    <location>
        <position position="170"/>
    </location>
</feature>
<feature type="mutagenesis site" description="Complete loss of virus capability to enter into host cell.">
    <original>I</original>
    <variation>E</variation>
    <location>
        <position position="170"/>
    </location>
</feature>
<feature type="mutagenesis site" description="50% loss of virus capability to enter into host cell.">
    <original>I</original>
    <variation>F</variation>
    <location>
        <position position="170"/>
    </location>
</feature>
<feature type="mutagenesis site" description="No effect on GP1 and GP2 expression. No loss of virus capability to enter into host cell." evidence="12">
    <original>N</original>
    <variation>D</variation>
    <location>
        <position position="204"/>
    </location>
</feature>
<feature type="mutagenesis site" description="No effect on GP1 and GP2 expression. 12% loss of virus capability to enter into host cell." evidence="12">
    <original>N</original>
    <variation>Y</variation>
    <location>
        <position position="238"/>
    </location>
</feature>
<feature type="mutagenesis site" description="No effect on GP1 and GP2 expression. 12% loss of virus capability to enter into host cell." evidence="12">
    <original>N</original>
    <variation>D</variation>
    <location>
        <position position="257"/>
    </location>
</feature>
<feature type="mutagenesis site" description="No effect on GP1 and GP2 expression. 18% loss of virus capability to enter into host cell." evidence="12">
    <original>N</original>
    <variation>D</variation>
    <location>
        <position position="296"/>
    </location>
</feature>
<feature type="mutagenesis site" description="Almost complete loss of cleavage between GP1 and GP2. No loss of infectivity." evidence="7">
    <original>RRTRR</original>
    <variation>AGTAA</variation>
    <location>
        <begin position="497"/>
        <end position="501"/>
    </location>
</feature>
<feature type="mutagenesis site" description="No effect on cleavage between GP1 and GP2." evidence="39">
    <original>RTRR</original>
    <variation>ATAA</variation>
    <location>
        <begin position="498"/>
        <end position="501"/>
    </location>
</feature>
<feature type="mutagenesis site" description="Induces GP1 secretion. Complete loss of virus capability to enter into host cell." evidence="12">
    <original>C</original>
    <variation>G</variation>
    <location>
        <position position="511"/>
    </location>
</feature>
<feature type="mutagenesis site" description="Reduced infectivity." evidence="5">
    <original>G</original>
    <variation>R</variation>
    <location>
        <position position="528"/>
    </location>
</feature>
<feature type="mutagenesis site" description="Reduced infectivity." evidence="5">
    <original>L</original>
    <variation>A</variation>
    <variation>R</variation>
    <location>
        <position position="529"/>
    </location>
</feature>
<feature type="mutagenesis site" description="Reduced infectivity." evidence="5">
    <original>I</original>
    <variation>A</variation>
    <location>
        <position position="532"/>
    </location>
</feature>
<feature type="mutagenesis site" description="Almost complete loss of infectivity. No effect on transport of GP to the cell surface and incorporation onto virions." evidence="5">
    <original>I</original>
    <variation>R</variation>
    <location>
        <position position="532"/>
    </location>
</feature>
<feature type="mutagenesis site" description="Reduced infectivity." evidence="5">
    <original>F</original>
    <variation>A</variation>
    <location>
        <position position="535"/>
    </location>
</feature>
<feature type="mutagenesis site" description="Almost complete loss of infectivity. No effect on transport of GP to the cell surface and incorporation onto virions." evidence="5">
    <original>F</original>
    <variation>R</variation>
    <location>
        <position position="535"/>
    </location>
</feature>
<feature type="mutagenesis site" description="Almost complete loss of infectivity. No effect on transport of GP to the cell surface and incorporation onto virions." evidence="5">
    <original>G</original>
    <variation>A</variation>
    <location>
        <position position="536"/>
    </location>
</feature>
<feature type="mutagenesis site" description="Almost complete loss of infectivity. No effect on transport of GP to the cell surface and incorporation onto virions." evidence="5">
    <original>P</original>
    <variation>R</variation>
    <location>
        <position position="537"/>
    </location>
</feature>
<feature type="mutagenesis site" description="Induces GP1 secretion. Complete loss of virus capability to enter into host cell." evidence="12">
    <original>C</original>
    <variation>S</variation>
    <location>
        <position position="556"/>
    </location>
</feature>
<feature type="mutagenesis site" description="Reduced levels of expression of GP, GP1 and GP2. 20% loss of virus capability to enter into host cell." evidence="12">
    <original>N</original>
    <variation>D</variation>
    <location>
        <position position="563"/>
    </location>
</feature>
<feature type="mutagenesis site" description="Induces GP1 secretion. Complete loss of virus capability to enter into host cell." evidence="12">
    <original>C</original>
    <variation>S</variation>
    <location>
        <position position="601"/>
    </location>
</feature>
<feature type="mutagenesis site" description="Induces GP1 secretion. Complete loss of virus capability to enter into host cell." evidence="12">
    <original>C</original>
    <variation>G</variation>
    <location>
        <position position="608"/>
    </location>
</feature>
<feature type="mutagenesis site" description="Induces GP1 secretion. Complete loss of virus capability to enter into host cell." evidence="12">
    <original>C</original>
    <variation>G</variation>
    <location>
        <position position="609"/>
    </location>
</feature>
<feature type="mutagenesis site" description="Slightly reduced levels of expression of GP1 and GP2. No loss of virus capability to enter into host cell." evidence="12">
    <original>N</original>
    <variation>D</variation>
    <location>
        <position position="618"/>
    </location>
</feature>
<feature type="mutagenesis site" description="No effect on release of soluble GP1,2delta." evidence="15">
    <original>D</original>
    <variation>V</variation>
    <location>
        <position position="632"/>
    </location>
</feature>
<feature type="mutagenesis site" description="No effect on release of soluble GP1,2delta." evidence="15">
    <original>K</original>
    <variation>R</variation>
    <variation>V</variation>
    <location>
        <position position="633"/>
    </location>
</feature>
<feature type="mutagenesis site" description="50% loss of release of soluble GP1,2delta." evidence="15">
    <original>T</original>
    <variation>I</variation>
    <location>
        <position position="634"/>
    </location>
</feature>
<feature type="mutagenesis site" description="60% loss of release of soluble GP1,2delta." evidence="15">
    <original>L</original>
    <variation>V</variation>
    <location>
        <position position="635"/>
    </location>
</feature>
<feature type="mutagenesis site" description="Increased GP shedding." evidence="24">
    <original>L</original>
    <variation>V</variation>
    <location>
        <position position="635"/>
    </location>
</feature>
<feature type="mutagenesis site" description="60% loss of release of soluble GP1,2delta.">
    <original>P</original>
    <variation>A</variation>
    <location>
        <position position="636"/>
    </location>
</feature>
<feature type="mutagenesis site" description="No effect on release of soluble GP1,2delta." evidence="15">
    <original>D</original>
    <variation>E</variation>
    <location>
        <position position="637"/>
    </location>
</feature>
<feature type="mutagenesis site" description="Increased release of soluble GP1,2delta." evidence="15">
    <original>D</original>
    <variation>L</variation>
    <variation>V</variation>
    <location>
        <position position="637"/>
    </location>
</feature>
<feature type="mutagenesis site" description="Decreased GP shedding." evidence="24">
    <original>D</original>
    <variation>V</variation>
    <location>
        <position position="637"/>
    </location>
</feature>
<feature type="mutagenesis site" description="No effect on release of soluble GP1,2delta." evidence="15">
    <original>Q</original>
    <variation>V</variation>
    <location>
        <position position="638"/>
    </location>
</feature>
<feature type="mutagenesis site" description="40% loss of release of soluble GP1,2delta." evidence="15">
    <original>G</original>
    <variation>V</variation>
    <location>
        <position position="639"/>
    </location>
</feature>
<feature type="mutagenesis site" description="No effect on release of soluble GP1,2delta." evidence="15">
    <original>D</original>
    <variation>V</variation>
    <location>
        <position position="640"/>
    </location>
</feature>
<feature type="mutagenesis site" description="No effect on release of soluble GP1,2delta." evidence="15">
    <original>N</original>
    <variation>A</variation>
    <location>
        <position position="641"/>
    </location>
</feature>
<feature type="mutagenesis site" description="No effect on release of soluble GP1,2delta." evidence="15">
    <original>D</original>
    <variation>V</variation>
    <location>
        <position position="642"/>
    </location>
</feature>
<feature type="mutagenesis site" description="No effect on release of soluble GP1,2delta." evidence="15">
    <original>N</original>
    <variation>A</variation>
    <location>
        <position position="643"/>
    </location>
</feature>
<feature type="mutagenesis site" description="About 60% loss of viral release; when associated with L-664." evidence="30">
    <original>G</original>
    <variation>L</variation>
    <location>
        <position position="660"/>
    </location>
</feature>
<feature type="mutagenesis site" description="About 60% loss of viral release; when associated with L-660." evidence="30">
    <original>A</original>
    <variation>L</variation>
    <location>
        <position position="664"/>
    </location>
</feature>
<feature type="mutagenesis site" description="Reduced palmitoylation. No effect on GP processing and association with retrovirus particle. No loss of virus capability to enter into host cell. Loss of localization to the rafts; when associated with A-670." evidence="7 10 12">
    <original>C</original>
    <variation>A</variation>
    <location>
        <position position="670"/>
    </location>
</feature>
<feature type="mutagenesis site" description="Slightly reduced levels of expression of GP1 and GP2. Greatly reduced GP processing and association with retrovirus particle. 43% loss of virus capability to enter into host cell. Loss of localization to the rafts; when associated with A-672." evidence="7 10 12">
    <original>C</original>
    <variation>F</variation>
    <location>
        <position position="670"/>
    </location>
</feature>
<feature type="mutagenesis site" description="Reduced palmitoylation. No effect on GP processing and association with retrovirus particle. No loss of virus capability to enter into host cell." evidence="7 12">
    <original>C</original>
    <variation>A</variation>
    <location>
        <position position="672"/>
    </location>
</feature>
<feature type="mutagenesis site" description="Slightly reduced levels of expression of GP1 and GP2. Almost no effect on GP processing and association with retrovirus particle. 24% loss of virus capability to enter into host cell." evidence="7 12">
    <original>C</original>
    <variation>F</variation>
    <location>
        <position position="672"/>
    </location>
</feature>
<feature type="strand" evidence="45">
    <location>
        <begin position="35"/>
        <end position="39"/>
    </location>
</feature>
<feature type="strand" evidence="45">
    <location>
        <begin position="42"/>
        <end position="46"/>
    </location>
</feature>
<feature type="helix" evidence="45">
    <location>
        <begin position="48"/>
        <end position="50"/>
    </location>
</feature>
<feature type="strand" evidence="46">
    <location>
        <begin position="53"/>
        <end position="55"/>
    </location>
</feature>
<feature type="helix" evidence="45">
    <location>
        <begin position="60"/>
        <end position="62"/>
    </location>
</feature>
<feature type="strand" evidence="45">
    <location>
        <begin position="63"/>
        <end position="69"/>
    </location>
</feature>
<feature type="helix" evidence="45">
    <location>
        <begin position="70"/>
        <end position="73"/>
    </location>
</feature>
<feature type="helix" evidence="45">
    <location>
        <begin position="79"/>
        <end position="83"/>
    </location>
</feature>
<feature type="strand" evidence="45">
    <location>
        <begin position="86"/>
        <end position="91"/>
    </location>
</feature>
<feature type="strand" evidence="45">
    <location>
        <begin position="96"/>
        <end position="98"/>
    </location>
</feature>
<feature type="strand" evidence="45">
    <location>
        <begin position="100"/>
        <end position="103"/>
    </location>
</feature>
<feature type="strand" evidence="45">
    <location>
        <begin position="105"/>
        <end position="114"/>
    </location>
</feature>
<feature type="strand" evidence="51">
    <location>
        <begin position="116"/>
        <end position="118"/>
    </location>
</feature>
<feature type="strand" evidence="45">
    <location>
        <begin position="120"/>
        <end position="122"/>
    </location>
</feature>
<feature type="strand" evidence="45">
    <location>
        <begin position="135"/>
        <end position="144"/>
    </location>
</feature>
<feature type="strand" evidence="45">
    <location>
        <begin position="149"/>
        <end position="154"/>
    </location>
</feature>
<feature type="strand" evidence="45">
    <location>
        <begin position="159"/>
        <end position="161"/>
    </location>
</feature>
<feature type="strand" evidence="45">
    <location>
        <begin position="163"/>
        <end position="169"/>
    </location>
</feature>
<feature type="strand" evidence="45">
    <location>
        <begin position="176"/>
        <end position="185"/>
    </location>
</feature>
<feature type="helix" evidence="47">
    <location>
        <begin position="188"/>
        <end position="190"/>
    </location>
</feature>
<feature type="turn" evidence="47">
    <location>
        <begin position="191"/>
        <end position="194"/>
    </location>
</feature>
<feature type="strand" evidence="45">
    <location>
        <begin position="216"/>
        <end position="224"/>
    </location>
</feature>
<feature type="strand" evidence="45">
    <location>
        <begin position="227"/>
        <end position="229"/>
    </location>
</feature>
<feature type="strand" evidence="45">
    <location>
        <begin position="231"/>
        <end position="237"/>
    </location>
</feature>
<feature type="strand" evidence="45">
    <location>
        <begin position="240"/>
        <end position="243"/>
    </location>
</feature>
<feature type="helix" evidence="45">
    <location>
        <begin position="250"/>
        <end position="262"/>
    </location>
</feature>
<feature type="strand" evidence="45">
    <location>
        <begin position="269"/>
        <end position="271"/>
    </location>
</feature>
<feature type="strand" evidence="45">
    <location>
        <begin position="273"/>
        <end position="277"/>
    </location>
</feature>
<feature type="turn" evidence="45">
    <location>
        <begin position="290"/>
        <end position="292"/>
    </location>
</feature>
<feature type="turn" evidence="49">
    <location>
        <begin position="303"/>
        <end position="305"/>
    </location>
</feature>
<feature type="strand" evidence="45">
    <location>
        <begin position="307"/>
        <end position="310"/>
    </location>
</feature>
<feature type="strand" evidence="48">
    <location>
        <begin position="314"/>
        <end position="317"/>
    </location>
</feature>
<feature type="strand" evidence="45">
    <location>
        <begin position="515"/>
        <end position="520"/>
    </location>
</feature>
<feature type="strand" evidence="50">
    <location>
        <begin position="523"/>
        <end position="525"/>
    </location>
</feature>
<feature type="turn" evidence="45">
    <location>
        <begin position="528"/>
        <end position="531"/>
    </location>
</feature>
<feature type="turn" evidence="45">
    <location>
        <begin position="533"/>
        <end position="535"/>
    </location>
</feature>
<feature type="helix" evidence="45">
    <location>
        <begin position="539"/>
        <end position="541"/>
    </location>
</feature>
<feature type="strand" evidence="45">
    <location>
        <begin position="543"/>
        <end position="548"/>
    </location>
</feature>
<feature type="helix" evidence="45">
    <location>
        <begin position="551"/>
        <end position="553"/>
    </location>
</feature>
<feature type="helix" evidence="44">
    <location>
        <begin position="560"/>
        <end position="594"/>
    </location>
</feature>
<feature type="helix" evidence="44">
    <location>
        <begin position="595"/>
        <end position="597"/>
    </location>
</feature>
<feature type="helix" evidence="44">
    <location>
        <begin position="600"/>
        <end position="604"/>
    </location>
</feature>
<feature type="helix" evidence="44">
    <location>
        <begin position="605"/>
        <end position="609"/>
    </location>
</feature>
<feature type="helix" evidence="44">
    <location>
        <begin position="616"/>
        <end position="628"/>
    </location>
</feature>
<gene>
    <name type="primary">GP</name>
</gene>
<sequence>MGVTGILQLPRDRFKRTSFFLWVIILFQRTFSIPLGVIHNSTLQVSDVDKLVCRDKLSSTNQLRSVGLNLEGNGVATDVPSATKRWGFRSGVPPKVVNYEAGEWAENCYNLEIKKPDGSECLPAAPDGIRGFPRCRYVHKVSGTGPCAGDFAFHKEGAFFLYDRLASTVIYRGTTFAEGVVAFLILPQAKKDFFSSHPLREPVNATEDPSSGYYSTTIRYQATGFGTNETEYLFEVDNLTYVQLESRFTPQFLLQLNETIYTSGKRSNTTGKLIWKVNPEIDTTIGEWAFWETKKNLTRKIRSEELSFTVVSNGAKNISGQSPARTSSDPGTNTTTEDHKIMASENSSAMVQVHSQGREAAVSHLTTLATISTSPQSLTTKPGPDNSTHNTPVYKLDISEATQVEQHHRRTDNDSTASDTPSATTAAGPPKAENTNTSKSTDFLDPATTTSPQNHSETAGNNNTHHQDTGEESASSGKLGLITNTIAGVAGLITGGRRTRREAIVNAQPKCNPNLHYWTTQDEGAAIGLAWIPYFGPAAEGIYIEGLMHNQDGLICGLRQLANETTQALQLFLRATTELRTFSILNRKAIDFLLQRWGGTCHILGPDCCIEPHDWTKNITDKIDQIIHDFVDKTLPDQGDNDNWWTGWRQWIPAGIGVTGVIIAVIALFCICKFVF</sequence>
<reference key="1">
    <citation type="journal article" date="1993" name="Virus Res.">
        <title>Sequence analysis of the Ebola virus genome: organization, genetic elements, and comparison with the genome of Marburg virus.</title>
        <authorList>
            <person name="Sanchez A."/>
            <person name="Kiley M.P."/>
            <person name="Holloway B.P."/>
            <person name="Auperin D.D."/>
        </authorList>
    </citation>
    <scope>NUCLEOTIDE SEQUENCE [GENOMIC RNA]</scope>
</reference>
<reference key="2">
    <citation type="journal article" date="1995" name="Virology">
        <title>GP mRNA of Ebola virus is edited by the Ebola virus polymerase and by T7 and vaccinia virus polymerases.</title>
        <authorList>
            <person name="Volchkov V.E."/>
            <person name="Becker S."/>
            <person name="Volchkova V.A."/>
            <person name="Ternovoj V.A."/>
            <person name="Kotov A.N."/>
            <person name="Netesov S.V."/>
            <person name="Klenk H.-D."/>
        </authorList>
    </citation>
    <scope>NUCLEOTIDE SEQUENCE [GENOMIC RNA / MRNA]</scope>
    <scope>RNA EDITING</scope>
</reference>
<reference key="3">
    <citation type="journal article" date="1996" name="Proc. Natl. Acad. Sci. U.S.A.">
        <title>The virion glycoproteins of Ebola viruses are encoded in two reading frames and are expressed through transcriptional editing.</title>
        <authorList>
            <person name="Sanchez A."/>
            <person name="Trappier S.G."/>
            <person name="Mahy B.W.J."/>
            <person name="Peters C.J."/>
            <person name="Nichol S.T."/>
        </authorList>
    </citation>
    <scope>NUCLEOTIDE SEQUENCE [GENOMIC RNA]</scope>
    <scope>RNA EDITING</scope>
</reference>
<reference key="4">
    <citation type="journal article" date="2000" name="Virology">
        <title>Molecular characterization of guinea pig-adapted variants of Ebola virus.</title>
        <authorList>
            <person name="Volchkov V.E."/>
            <person name="Chepurnov A.A."/>
            <person name="Volchkova V.A."/>
            <person name="Ternovoj V.A."/>
            <person name="Klenk H.D."/>
        </authorList>
    </citation>
    <scope>NUCLEOTIDE SEQUENCE [GENOMIC RNA]</scope>
    <source>
        <strain>Isolate guinea pig-adapted</strain>
    </source>
</reference>
<reference key="5">
    <citation type="submission" date="2000-06" db="EMBL/GenBank/DDBJ databases">
        <authorList>
            <person name="Volchkov V.E."/>
        </authorList>
    </citation>
    <scope>NUCLEOTIDE SEQUENCE [GENOMIC RNA]</scope>
</reference>
<reference key="6">
    <citation type="submission" date="2002-04" db="EMBL/GenBank/DDBJ databases">
        <authorList>
            <person name="Wilson J.A."/>
            <person name="Kondig J.P."/>
            <person name="Kuehne A.I."/>
            <person name="Hart M.K."/>
        </authorList>
    </citation>
    <scope>NUCLEOTIDE SEQUENCE [GENOMIC RNA]</scope>
    <source>
        <strain>Isolate mouse-adapted</strain>
    </source>
</reference>
<reference key="7">
    <citation type="journal article" date="1992" name="FEBS Lett.">
        <title>The envelope glycoprotein of Ebola virus contains an immunosuppressive-like domain similar to oncogenic retroviruses.</title>
        <authorList>
            <person name="Volchkov V.E."/>
            <person name="Blinov V.M."/>
            <person name="Netesov S.V."/>
        </authorList>
    </citation>
    <scope>NUCLEOTIDE SEQUENCE [GENOMIC RNA] OF 359-676</scope>
</reference>
<reference key="8">
    <citation type="journal article" date="1998" name="Proc. Natl. Acad. Sci. U.S.A.">
        <title>Processing of the Ebola virus glycoprotein by the proprotein convertase furin.</title>
        <authorList>
            <person name="Volchkov V.E."/>
            <person name="Feldmann H."/>
            <person name="Volchkova V.A."/>
            <person name="Klenk H.-D."/>
        </authorList>
    </citation>
    <scope>PROTEOLYTIC PROCESSING (ENVELOPE GLYCOPROTEIN)</scope>
    <scope>TOPOLOGY</scope>
</reference>
<reference key="9">
    <citation type="journal article" date="1998" name="Virology">
        <title>Release of viral glycoproteins during Ebola virus infection.</title>
        <authorList>
            <person name="Volchkov V.E."/>
            <person name="Volchkova V.A."/>
            <person name="Slenczka W."/>
            <person name="Klenk H.-D."/>
            <person name="Feldmann H."/>
        </authorList>
    </citation>
    <scope>PROTEOLYTIC PROCESSING (ENVELOPE GLYCOPROTEIN)</scope>
</reference>
<reference key="10">
    <citation type="journal article" date="1998" name="J. Virol.">
        <title>Phosphatidylinositol-dependent membrane fusion induced by a putative fusogenic sequence of Ebola virus.</title>
        <authorList>
            <person name="Ruiz-Arguello M.B."/>
            <person name="Goni F.M."/>
            <person name="Pereira F.B."/>
            <person name="Nieva J.L."/>
        </authorList>
    </citation>
    <scope>DOMAIN</scope>
</reference>
<reference key="11">
    <citation type="journal article" date="1999" name="J. Virol.">
        <title>Mutational analysis of the putative fusion domain of Ebola virus glycoprotein.</title>
        <authorList>
            <person name="Ito H."/>
            <person name="Watanabe S."/>
            <person name="Sanchez A."/>
            <person name="Whitt M.A."/>
            <person name="Kawaoka Y."/>
        </authorList>
    </citation>
    <scope>DOMAIN</scope>
    <scope>MUTAGENESIS OF GLY-528; LEU-529; ILE-532; PHE-535; GLY-536 AND PRO-537</scope>
</reference>
<reference key="12">
    <citation type="journal article" date="1999" name="J. Virol.">
        <title>Endoproteolytic processing of the ebola virus envelope glycoprotein: cleavage is not required for function.</title>
        <authorList>
            <person name="Wool-Lewis R.J."/>
            <person name="Bates P."/>
        </authorList>
    </citation>
    <scope>PROTEOLYTIC PROCESSING (ENVELOPE GLYCOPROTEIN)</scope>
    <scope>MUTAGENESIS OF 498-ARG--ARG-501</scope>
</reference>
<reference key="13">
    <citation type="journal article" date="2000" name="Nat. Med.">
        <title>Identification of the Ebola virus glycoprotein as the main viral determinant of vascular cell cytotoxicity and injury.</title>
        <authorList>
            <person name="Yang Z.-Y."/>
            <person name="Duckers H.J."/>
            <person name="Sullivan N.J."/>
            <person name="Sanchez A."/>
            <person name="Nabel E.G."/>
            <person name="Nabel G.J."/>
        </authorList>
    </citation>
    <scope>FUNCTION</scope>
    <scope>DOMAIN MUCIN/LIKE REGION</scope>
</reference>
<reference key="14">
    <citation type="journal article" date="2000" name="Virology">
        <title>Downregulation of beta1 integrins by Ebola virus glycoprotein: implication for virus entry.</title>
        <authorList>
            <person name="Takada A."/>
            <person name="Watanabe S."/>
            <person name="Ito H."/>
            <person name="Okazaki K."/>
            <person name="Kida H."/>
            <person name="Kawaoka Y."/>
        </authorList>
    </citation>
    <scope>FUNCTION (ENVELOPE GLYCOPROTEIN)</scope>
</reference>
<reference key="15">
    <citation type="journal article" date="2001" name="J. Virol.">
        <title>Ebola virus glycoprotein: proteolytic processing, acylation, cell tropism, and detection of neutralizing antibodies.</title>
        <authorList>
            <person name="Ito H."/>
            <person name="Watanabe S."/>
            <person name="Takada A."/>
            <person name="Kawaoka Y."/>
        </authorList>
    </citation>
    <scope>PROTEOLYTIC PROCESSING (ENVELOPE GLYCOPROTEIN)</scope>
    <scope>PALMITOYLATION AT CYS-670 AND CYS-672</scope>
    <scope>MUTAGENESIS OF 497-ARG--ARG-501; CYS-670 AND CYS-672</scope>
</reference>
<reference key="16">
    <citation type="journal article" date="2000" name="J. Virol.">
        <title>Functional importance of the coiled-coil of the Ebola virus glycoprotein.</title>
        <authorList>
            <person name="Watanabe S."/>
            <person name="Takada A."/>
            <person name="Watanabe T."/>
            <person name="Ito H."/>
            <person name="Kida H."/>
            <person name="Kawaoka Y."/>
        </authorList>
    </citation>
    <scope>COILED-COIL</scope>
</reference>
<reference key="17">
    <citation type="journal article" date="2001" name="Cell">
        <title>Folate receptor-alpha is a cofactor for cellular entry by Marburg and Ebola viruses.</title>
        <authorList>
            <person name="Chan S.Y."/>
            <person name="Empig C.J."/>
            <person name="Welte F.J."/>
            <person name="Speck R.F."/>
            <person name="Schmaljohn A."/>
            <person name="Kreisberg J.F."/>
            <person name="Goldsmith M.A."/>
        </authorList>
    </citation>
    <scope>INTERACTION WITH HUMAN FOLR1 (ENVELOPE GLYCOPROTEIN)</scope>
</reference>
<reference key="18">
    <citation type="journal article" date="2002" name="J. Virol.">
        <title>Covalent modifications of the ebola virus glycoprotein.</title>
        <authorList>
            <person name="Jeffers S.A."/>
            <person name="Sanders D.A."/>
            <person name="Sanchez A."/>
        </authorList>
    </citation>
    <scope>DISULFIDE BONDS</scope>
    <scope>GLYCOSYLATION</scope>
    <scope>MUTAGENESIS OF ASN-40; CYS-53; CYS-108; CYS-121; CYS-135; CYS-147; ASN-204; ASN-238; ASN-257; ASN-296; CYS-511; CYS-556; ASN-563; CYS-601; CYS-608; CYS-609; ASN-618; CYS-670 AND CYS-672</scope>
</reference>
<reference key="19">
    <citation type="journal article" date="2002" name="J. Virol.">
        <title>Ebola virus glycoproteins induce global surface protein down-modulation and loss of cell adherence.</title>
        <authorList>
            <person name="Simmons G."/>
            <person name="Wool-Lewis R.J."/>
            <person name="Baribaud F."/>
            <person name="Netter R.C."/>
            <person name="Bates P."/>
        </authorList>
    </citation>
    <scope>FUNCTION (ENVELOPE GLYCOPROTEIN)</scope>
</reference>
<reference key="20">
    <citation type="journal article" date="2002" name="J. Exp. Med.">
        <title>Lipid raft microdomains: a gateway for compartmentalized trafficking of Ebola and Marburg viruses.</title>
        <authorList>
            <person name="Bavari S."/>
            <person name="Bosio C.M."/>
            <person name="Wiegand E."/>
            <person name="Ruthel G."/>
            <person name="Will A.B."/>
            <person name="Geisbert T.W."/>
            <person name="Hevey M."/>
            <person name="Schmaljohn C."/>
            <person name="Schmaljohn A."/>
            <person name="Aman M.J."/>
        </authorList>
    </citation>
    <scope>SUBCELLULAR LOCATION</scope>
    <scope>MUTAGENESIS OF CYS-670 AND CYS-672</scope>
</reference>
<reference key="21">
    <citation type="journal article" date="2002" name="J. Virol.">
        <title>C-type lectins DC-SIGN and L-SIGN mediate cellular entry by Ebola virus in cis and in trans.</title>
        <authorList>
            <person name="Alvarez C.P."/>
            <person name="Lasala F."/>
            <person name="Carrillo J."/>
            <person name="Muniz O."/>
            <person name="Corbi A.L."/>
            <person name="Delgado R."/>
        </authorList>
    </citation>
    <scope>INTERACTION WITH HUMAN CD209 (ENVELOPE GLYCOPROTEIN)</scope>
    <scope>INTERACTION WITH HOST CLEC4M (ENVELOPE GLYCOPROTEIN)</scope>
    <scope>ROLE IN TRANS INFECTION</scope>
</reference>
<reference key="22">
    <citation type="journal article" date="2003" name="J. Virol.">
        <title>Folate receptor alpha and caveolae are not required for Ebola virus glycoprotein-mediated viral infection.</title>
        <authorList>
            <person name="Simmons G."/>
            <person name="Rennekamp A.J."/>
            <person name="Chai N."/>
            <person name="Vandenberghe L.H."/>
            <person name="Riley J.L."/>
            <person name="Bates P."/>
        </authorList>
    </citation>
    <scope>PUTATIVE ROLE OF FOLR1 IN VIRUS ENTRY INTO THE CELL</scope>
</reference>
<reference key="23">
    <citation type="journal article" date="2003" name="Virology">
        <title>DC-SIGN and DC-SIGNR bind ebola glycoproteins and enhance infection of macrophages and endothelial cells.</title>
        <authorList>
            <person name="Simmons G."/>
            <person name="Reeves J.D."/>
            <person name="Grogan C.C."/>
            <person name="Vandenberghe L.H."/>
            <person name="Baribaud F."/>
            <person name="Whitbeck J.C."/>
            <person name="Burke E."/>
            <person name="Buchmeier M.J."/>
            <person name="Soilleux E.J."/>
            <person name="Riley J.L."/>
            <person name="Doms R.W."/>
            <person name="Bates P."/>
            <person name="Poehlmann S."/>
        </authorList>
    </citation>
    <scope>INTERACTION WITH HUMAN CD209 (ENVELOPE GLYCOPROTEIN)</scope>
    <scope>INTERACTION WITH HOST CLEC4M (ENVELOPE GLYCOPROTEIN)</scope>
</reference>
<reference key="24">
    <citation type="journal article" date="2004" name="EMBO J.">
        <title>Ectodomain shedding of the glycoprotein GP of Ebola virus.</title>
        <authorList>
            <person name="Dolnik O."/>
            <person name="Volchkova V."/>
            <person name="Garten W."/>
            <person name="Carbonnelle C."/>
            <person name="Becker S."/>
            <person name="Kahnt J."/>
            <person name="Stroeher U."/>
            <person name="Klenk H.-D."/>
            <person name="Volchkov V."/>
        </authorList>
    </citation>
    <scope>CLEAVAGE BY HOST ADAM17</scope>
    <scope>MUTAGENESIS OF ASP-632; LYS-633; THR-634; LEU-635; ASP-637; GLN-638; GLY-639; ASP-640; ASN-641; ASP-642 AND ASN-643</scope>
    <scope>SUBCELLULAR LOCATION</scope>
</reference>
<reference key="25">
    <citation type="journal article" date="2004" name="J. Virol.">
        <title>Human macrophage C-type lectin specific for galactose and N-acetylgalactosamine promotes filovirus entry.</title>
        <authorList>
            <person name="Takada A."/>
            <person name="Fujioka K."/>
            <person name="Tsuiji M."/>
            <person name="Morikawa A."/>
            <person name="Higashi N."/>
            <person name="Ebihara H."/>
            <person name="Kobasa D."/>
            <person name="Feldmann H."/>
            <person name="Irimura T."/>
            <person name="Kawaoka Y."/>
        </authorList>
    </citation>
    <scope>INTERACTION WITH HUMAN CLEC10A (ENVELOPE GLYCOPROTEIN)</scope>
</reference>
<reference key="26">
    <citation type="journal article" date="2005" name="J. Virol.">
        <title>Effects of Ebola virus glycoproteins on endothelial cell activation and barrier function.</title>
        <authorList>
            <person name="Wahl-Jensen V.M."/>
            <person name="Afanasieva T.A."/>
            <person name="Seebach J."/>
            <person name="Stroeher U."/>
            <person name="Feldmann H."/>
            <person name="Schnittler H.J."/>
        </authorList>
    </citation>
    <scope>FUNCTION (GP1)</scope>
</reference>
<reference key="27">
    <citation type="journal article" date="2005" name="Science">
        <title>Endosomal proteolysis of the Ebola virus glycoprotein is necessary for infection.</title>
        <authorList>
            <person name="Chandran K."/>
            <person name="Sullivan N.J."/>
            <person name="Felbor U."/>
            <person name="Whelan S.P."/>
            <person name="Cunningham J.M."/>
        </authorList>
    </citation>
    <scope>PROTEOLYSIS (GP1)</scope>
</reference>
<reference key="28">
    <citation type="journal article" date="2005" name="J. Virol.">
        <title>Role of Ebola virus secreted glycoproteins and virus-like particles in activation of human macrophages.</title>
        <authorList>
            <person name="Wahl-Jensen V."/>
            <person name="Kurz S.K."/>
            <person name="Hazelton P.R."/>
            <person name="Schnittler H.J."/>
            <person name="Stroeher U."/>
            <person name="Burton D.R."/>
            <person name="Feldmann H."/>
        </authorList>
    </citation>
    <scope>FUNCTION (GP1,2DELTA)</scope>
    <scope>SUBUNIT (GP1,2DELTA)</scope>
</reference>
<reference key="29">
    <citation type="journal article" date="2005" name="J. Virol.">
        <title>Ebola virus glycoprotein toxicity is mediated by a dynamin-dependent protein-trafficking pathway.</title>
        <authorList>
            <person name="Sullivan N.J."/>
            <person name="Peterson M."/>
            <person name="Yang Z.-Y."/>
            <person name="Kong W.-P."/>
            <person name="Duckers H."/>
            <person name="Nabel E."/>
            <person name="Nabel G.J."/>
        </authorList>
    </citation>
    <scope>DOWN-MODULATION OF HOST INTEGRIN DIMER ALPHA-V/BETA-3</scope>
    <scope>INTERACTION WITH HUMAN INTEGRIN ITGAV (ENVELOPE GLYCOPROTEIN)</scope>
</reference>
<reference key="30">
    <citation type="journal article" date="2006" name="J. Virol.">
        <title>Role of endosomal cathepsins in entry mediated by the Ebola virus glycoprotein.</title>
        <authorList>
            <person name="Schornberg K."/>
            <person name="Matsuyama S."/>
            <person name="Kabsch K."/>
            <person name="Delos S."/>
            <person name="Bouton A."/>
            <person name="White J."/>
        </authorList>
    </citation>
    <scope>PROTEOLYSIS (GP1)</scope>
</reference>
<reference key="31">
    <citation type="journal article" date="2006" name="J. Gen. Virol.">
        <title>Ebola virus glycoprotein GP is not cytotoxic when expressed constitutively at a moderate level.</title>
        <authorList>
            <person name="Alazard-Dany N."/>
            <person name="Volchkova V."/>
            <person name="Reynard O."/>
            <person name="Carbonnelle C."/>
            <person name="Dolnik O."/>
            <person name="Ottmann M."/>
            <person name="Khromykh A."/>
            <person name="Volchkov V.E."/>
        </authorList>
    </citation>
    <scope>FUNCTION</scope>
</reference>
<reference key="32">
    <citation type="journal article" date="2006" name="J. Virol.">
        <title>The signal peptide of the ebolavirus glycoprotein influences interaction with the cellular lectins DC-SIGN and DC-SIGNR.</title>
        <authorList>
            <person name="Marzi A."/>
            <person name="Akhavan A."/>
            <person name="Simmons G."/>
            <person name="Gramberg T."/>
            <person name="Hofmann H."/>
            <person name="Bates P."/>
            <person name="Lingappa V.R."/>
            <person name="Poehlmann S."/>
        </authorList>
    </citation>
    <scope>FUNCTION OF SIGNAL PEPTIDE</scope>
</reference>
<reference key="33">
    <citation type="journal article" date="2006" name="J. Biol. Chem.">
        <title>Conserved receptor-binding domains of Lake Victoria marburgvirus and Zaire ebolavirus bind a common receptor.</title>
        <authorList>
            <person name="Kuhn J.H."/>
            <person name="Radoshitzky S.R."/>
            <person name="Guth A.C."/>
            <person name="Warfield K.L."/>
            <person name="Li W."/>
            <person name="Vincent M.J."/>
            <person name="Towner J.S."/>
            <person name="Nichol S.T."/>
            <person name="Bavari S."/>
            <person name="Choe H."/>
            <person name="Aman M.J."/>
            <person name="Farzan M."/>
        </authorList>
    </citation>
    <scope>RECEPTOR-BINDING REGION</scope>
</reference>
<reference key="34">
    <citation type="journal article" date="2010" name="PLoS Pathog.">
        <title>Cellular entry of ebola virus involves uptake by a macropinocytosis-like mechanism and subsequent trafficking through early and late endosomes.</title>
        <authorList>
            <person name="Saeed M.F."/>
            <person name="Kolokoltsov A.A."/>
            <person name="Albrecht T."/>
            <person name="Davey R.A."/>
        </authorList>
    </citation>
    <scope>FUNCTION</scope>
</reference>
<reference key="35">
    <citation type="journal article" date="2010" name="J. Virol.">
        <title>Interaction between Ebola virus glycoprotein and host toll-like receptor 4 leads to induction of proinflammatory cytokines and SOCS1.</title>
        <authorList>
            <person name="Okumura A."/>
            <person name="Pitha P.M."/>
            <person name="Yoshimura A."/>
            <person name="Harty R.N."/>
        </authorList>
    </citation>
    <scope>INTERACTION WITH HOST TLR4 (ENVELOPE GLYCOPROTEIN)</scope>
</reference>
<reference key="36">
    <citation type="journal article" date="2010" name="Virology">
        <title>Ebola virus uses clathrin-mediated endocytosis as an entry pathway.</title>
        <authorList>
            <person name="Bhattacharyya S."/>
            <person name="Warfield K.L."/>
            <person name="Ruthel G."/>
            <person name="Bavari S."/>
            <person name="Aman M.J."/>
            <person name="Hope T.J."/>
        </authorList>
    </citation>
    <scope>FUNCTION</scope>
</reference>
<reference key="37">
    <citation type="journal article" date="2011" name="Nature">
        <title>Ebola virus entry requires the cholesterol transporter Niemann-Pick C1.</title>
        <authorList>
            <person name="Carette J.E."/>
            <person name="Raaben M."/>
            <person name="Wong A.C."/>
            <person name="Herbert A.S."/>
            <person name="Obernosterer G."/>
            <person name="Mulherkar N."/>
            <person name="Kuehne A.I."/>
            <person name="Kranzusch P.J."/>
            <person name="Griffin A.M."/>
            <person name="Ruthel G."/>
            <person name="Dal Cin P."/>
            <person name="Dye J.M."/>
            <person name="Whelan S.P."/>
            <person name="Chandran K."/>
            <person name="Brummelkamp T.R."/>
        </authorList>
    </citation>
    <scope>INTERACTION WITH HOST NPC1 (ENVELOPE GLYCOPROTEIN)</scope>
    <scope>FUNCTION (GP1)</scope>
</reference>
<reference key="38">
    <citation type="journal article" date="2012" name="J. Virol.">
        <title>Cathepsin cleavage potentiates the Ebola virus glycoprotein to undergo a subsequent fusion-relevant conformational change.</title>
        <authorList>
            <person name="Brecher M."/>
            <person name="Schornberg K.L."/>
            <person name="Delos S.E."/>
            <person name="Fusco M.L."/>
            <person name="Saphire E.O."/>
            <person name="White J.M."/>
        </authorList>
    </citation>
    <scope>FUNCTION</scope>
    <scope>PROTEOLYTIC CLEAVAGE (GP1)</scope>
</reference>
<reference key="39">
    <citation type="journal article" date="2014" name="PLoS Pathog.">
        <title>Shed GP of Ebola virus triggers immune activation and increased vascular permeability.</title>
        <authorList>
            <person name="Escudero-Perez B."/>
            <person name="Volchkova V.A."/>
            <person name="Dolnik O."/>
            <person name="Lawrence P."/>
            <person name="Volchkov V.E."/>
        </authorList>
    </citation>
    <scope>FUNCTION (SHED GP)</scope>
    <scope>SUBCELLULAR LOCATION (SHED GP)</scope>
    <scope>GLYCOSYLATION (SHED GP)</scope>
</reference>
<reference key="40">
    <citation type="journal article" date="2015" name="Viruses">
        <title>Requirements within the Ebola viral glycoprotein for tetherin antagonism.</title>
        <authorList>
            <person name="Vande Burgt N.H."/>
            <person name="Kaletsky R.L."/>
            <person name="Bates P."/>
        </authorList>
    </citation>
    <scope>FUNCTION (ENVELOPE GLYCOPROTEIN)</scope>
</reference>
<reference key="41">
    <citation type="journal article" date="2015" name="J. Infect. Dis.">
        <title>Shedding of Ebola Virus Surface Glycoprotein Is a Mechanism of Self-regulation of Cellular Cytotoxicity and Has a Direct Effect on Virus Infectivity.</title>
        <authorList>
            <person name="Dolnik O."/>
            <person name="Volchkova V.A."/>
            <person name="Escudero-Perez B."/>
            <person name="Lawrence P."/>
            <person name="Klenk H.D."/>
            <person name="Volchkov V.E."/>
        </authorList>
    </citation>
    <scope>FUNCTION (SHED GP)</scope>
    <scope>MUTAGENESIS OF LEU-635 AND ASP-637</scope>
</reference>
<reference key="42">
    <citation type="journal article" date="2016" name="J. Virol.">
        <title>The Tetherin Antagonism of the Ebola Virus Glycoprotein Requires an Intact Receptor-Binding Domain and Can Be Blocked by GP1-Specific Antibodies.</title>
        <authorList>
            <person name="Brinkmann C."/>
            <person name="Nehlmeier I."/>
            <person name="Walendy-Gnirss K."/>
            <person name="Nehls J."/>
            <person name="Gonzalez Hernandez M."/>
            <person name="Hoffmann M."/>
            <person name="Qiu X."/>
            <person name="Takada A."/>
            <person name="Schindler M."/>
            <person name="Poehlmann S."/>
        </authorList>
    </citation>
    <scope>FUNCTION (ENVELOPE GLYCOPROTEIN)</scope>
    <scope>INTERACTION WITH HOST BST2 (ENVELOPE GLYCOPROTEIN)</scope>
    <scope>MUTAGENESIS OF PHE-88; LEU-111 AND LEU-122</scope>
</reference>
<reference key="43">
    <citation type="journal article" date="2016" name="J. Virol.">
        <title>Enhancement of Ebola Virus Infection via Ficolin-1 Interaction with the Mucin Domain of GP Glycoprotein.</title>
        <authorList>
            <person name="Favier A.L."/>
            <person name="Gout E."/>
            <person name="Reynard O."/>
            <person name="Ferraris O."/>
            <person name="Kleman J.P."/>
            <person name="Volchkov V."/>
            <person name="Peyrefitte C."/>
            <person name="Thielens N.M."/>
        </authorList>
    </citation>
    <scope>INTERACTION WITH HOST FCN1 (ENVELOPE GLYCOPROTEIN)</scope>
</reference>
<reference key="44">
    <citation type="journal article" date="2017" name="PLoS Pathog.">
        <title>Ebola virus glycoprotein directly triggers T lymphocyte death despite of the lack of infection.</title>
        <authorList>
            <person name="Iampietro M."/>
            <person name="Younan P."/>
            <person name="Nishida A."/>
            <person name="Dutta M."/>
            <person name="Lubaki N.M."/>
            <person name="Santos R.I."/>
            <person name="Koup R.A."/>
            <person name="Katze M.G."/>
            <person name="Bukreyev A."/>
        </authorList>
    </citation>
    <scope>FUNCTION (ENVELOPE GLYCOPROTEIN)</scope>
    <scope>INTERACTION WITH HOST TLR4 (ENVELOPE GLYCOPROTEIN)</scope>
</reference>
<reference key="45">
    <citation type="journal article" date="2017" name="J. Virol.">
        <title>Cooperation of the Ebola Virus Proteins VP40 and GP1,2 with BST2 To Activate NF-kappaB Independently of Virus-Like Particle Trapping.</title>
        <authorList>
            <person name="Rizk M.G."/>
            <person name="Basler C.F."/>
            <person name="Guatelli J."/>
        </authorList>
    </citation>
    <scope>FUNCTION (ENVELOPE GLYCOPROTEIN)</scope>
</reference>
<reference key="46">
    <citation type="journal article" date="2018" name="J. Virol.">
        <title>A GXXXA Motif in the Transmembrane Domain of the Ebola Virus Glycoprotein Is Required for Tetherin Antagonism.</title>
        <authorList>
            <person name="Gonzalez-Hernandez M."/>
            <person name="Hoffmann M."/>
            <person name="Brinkmann C."/>
            <person name="Nehls J."/>
            <person name="Winkler M."/>
            <person name="Schindler M."/>
            <person name="Poehlmann S."/>
        </authorList>
    </citation>
    <scope>FUNCTION (ENVELOPE GLYCOPROTEIN)</scope>
    <scope>MOTIF</scope>
    <scope>MUTAGENESIS OF GLY-660 AND ALA-664</scope>
</reference>
<reference key="47">
    <citation type="journal article" date="2018" name="Front. Immunol.">
        <title>The Ebola-Glycoprotein Modulates the Function of Natural Killer Cells.</title>
        <authorList>
            <person name="Edri A."/>
            <person name="Shemesh A."/>
            <person name="Iraqi M."/>
            <person name="Matalon O."/>
            <person name="Brusilovsky M."/>
            <person name="Hadad U."/>
            <person name="Radinsky O."/>
            <person name="Gershoni-Yahalom O."/>
            <person name="Dye J.M."/>
            <person name="Mandelboim O."/>
            <person name="Barda-Saad M."/>
            <person name="Lobel L."/>
            <person name="Porgador A."/>
        </authorList>
    </citation>
    <scope>FUNCTION (ENVELOPE GLYCOPROTEIN)</scope>
</reference>
<reference key="48">
    <citation type="journal article" date="2018" name="J. Infect. Dis.">
        <title>Ebola Virus Shed Glycoprotein Triggers Differentiation, Infection, and Death of Monocytes Through Toll-Like Receptor 4 Activation.</title>
        <authorList>
            <person name="Iampietro M."/>
            <person name="Santos R.I."/>
            <person name="Lubaki N.M."/>
            <person name="Bukreyev A."/>
        </authorList>
    </citation>
    <scope>FUNCTION (SHED GP)</scope>
    <scope>SUBCELLULAR LOCATION (SHED GP)</scope>
</reference>
<reference key="49">
    <citation type="journal article" date="2020" name="PLoS Biol.">
        <title>Conformational changes in the Ebola virus membrane fusion machine induced by pH, Ca2+, and receptor binding.</title>
        <authorList>
            <person name="Das D.K."/>
            <person name="Bulow U."/>
            <person name="Diehl W.E."/>
            <person name="Durham N.D."/>
            <person name="Senjobe F."/>
            <person name="Chandran K."/>
            <person name="Luban J."/>
            <person name="Munro J.B."/>
        </authorList>
    </citation>
    <scope>INTERACTION WITH HOST NPC1</scope>
    <scope>FUNCTION</scope>
</reference>
<reference key="50">
    <citation type="journal article" date="1999" name="Proc. Natl. Acad. Sci. U.S.A.">
        <title>Core structure of the envelope glycoprotein GP2 from Ebola virus at 1.9-A resolution.</title>
        <authorList>
            <person name="Malashkevich V.N."/>
            <person name="Schneider B.J."/>
            <person name="McNally M.L."/>
            <person name="Milhollen M.A."/>
            <person name="Pang J.X."/>
            <person name="Kim P.S."/>
        </authorList>
    </citation>
    <scope>X-RAY CRYSTALLOGRAPHY (1.9 ANGSTROMS) OF 557-630</scope>
</reference>
<reference evidence="43" key="51">
    <citation type="journal article" date="2022" name="Cell">
        <title>Asymmetric and non-stoichiometric glycoprotein recognition by two distinct antibodies results in broad protection against ebolaviruses.</title>
        <authorList>
            <person name="Milligan J.C."/>
            <person name="Davis C.W."/>
            <person name="Yu X."/>
            <person name="Ilinykh P.A."/>
            <person name="Huang K."/>
            <person name="Halfmann P.J."/>
            <person name="Cross R.W."/>
            <person name="Borisevich V."/>
            <person name="Agans K.N."/>
            <person name="Geisbert J.B."/>
            <person name="Chennareddy C."/>
            <person name="Goff A.J."/>
            <person name="Piper A.E."/>
            <person name="Hui S."/>
            <person name="Shaffer K.C.L."/>
            <person name="Buck T."/>
            <person name="Heinrich M.L."/>
            <person name="Branco L.M."/>
            <person name="Crozier I."/>
            <person name="Holbrook M.R."/>
            <person name="Kuhn J.H."/>
            <person name="Kawaoka Y."/>
            <person name="Glass P.J."/>
            <person name="Bukreyev A."/>
            <person name="Geisbert T.W."/>
            <person name="Worwa G."/>
            <person name="Ahmed R."/>
            <person name="Saphire E.O."/>
        </authorList>
    </citation>
    <scope>STRUCTURE BY ELECTRON MICROSCOPY (3.59 ANGSTROMS) OF 33-188 AND 504-599 IN COMPLEX WITH ANTIBODIES 1C3 AND 1C11</scope>
    <scope>SUBUNIT (ENVELOPE GLYCOPROTEIN)</scope>
</reference>
<accession>Q05320</accession>
<accession>Q66818</accession>
<accession>Q77LU5</accession>
<accession>Q8B9S1</accession>
<accession>Q8JS62</accession>
<organism>
    <name type="scientific">Zaire ebolavirus (strain Mayinga-76)</name>
    <name type="common">ZEBOV</name>
    <name type="synonym">Zaire Ebola virus</name>
    <dbReference type="NCBI Taxonomy" id="128952"/>
    <lineage>
        <taxon>Viruses</taxon>
        <taxon>Riboviria</taxon>
        <taxon>Orthornavirae</taxon>
        <taxon>Negarnaviricota</taxon>
        <taxon>Haploviricotina</taxon>
        <taxon>Monjiviricetes</taxon>
        <taxon>Mononegavirales</taxon>
        <taxon>Filoviridae</taxon>
        <taxon>Orthoebolavirus</taxon>
        <taxon>Orthoebolavirus zairense</taxon>
        <taxon>Zaire ebolavirus</taxon>
    </lineage>
</organism>
<comment type="function">
    <molecule>Envelope glycoprotein</molecule>
    <text evidence="6 9 25 27 28 29 30 31 41">Trimeric GP1,2 complexes form the virion surface spikes and mediate the viral entry processes, with GP1 acting as the receptor-binding subunit and GP2 as the membrane fusion subunit. At later times of infection, down-regulates the expression of various host cell surface molecules that are essential for immune surveillance and cell adhesion (PubMed:11836430). Down-modulates several integrins including ITGA1, ITGA2, ITGA3, ITGA4, ITGA5, ITGA6, ITGAV and ITGB1 (PubMed:11112476). This decrease in cell adhesion molecules may lead to cell detachment, contributing to the disruption of blood vessel integrity and hemorrhages developed during infection (cytotoxicity) (Probable). Interacts with host TLR4 and thereby stimulates the differentiation and activation of monocytes leading to bystander death of T-lymphocytes (PubMed:28542576). Down-regulates as well the function of host natural killer cells (PubMed:30013549). Counteracts the antiviral effect of host BST2/tetherin that restricts release of progeny virions from infected cells (PubMed:26516900, PubMed:27707924, PubMed:29669839). However, cooperates with VP40 and host BST2 to activate canonical NF-kappa-B pathway in a manner dependent on neddylation (PubMed:28878074).</text>
</comment>
<comment type="function">
    <molecule>Shed GP</molecule>
    <text evidence="23 24 32">Functions as a decoy for anti-GP1,2 antibodies thereby contributing to viral immune evasion. Interacts and activates host macrophages and dendritic cells inducing up-regulation of cytokine transcription. This effect is mediated throught activation of host TLR4.</text>
</comment>
<comment type="function">
    <molecule>GP1</molecule>
    <text evidence="1 2 18 21 22 33">Responsible for binding to the receptor(s) on target cells. Interacts with CD209/DC-SIGN and CLEC4M/DC-SIGNR which act as cofactors for virus entry into dendritic cells (DCs) and endothelial cells (PubMed:16051836). Binding to the macrophage specific lectin CLEC10A also seems to enhance virus infectivity (By similarity). Interaction with FOLR1/folate receptor alpha may be a cofactor for virus entry in some cell types, although results are contradictory. Members of the Tyro3 receptor tyrosine kinase family also seem to be cell entry factors in filovirus infection (By similarity). Once attached, the virions are internalized through clathrin-dependent endocytosis and/or macropinocytosis. After internalization of the virus into the endosomes of the host cell, proteolysis of GP1 by two cysteine proteases, CTSB/cathepsin B and CTSL/cathepsin L removes the glycan cap and allows GP1 binding to the host entry receptor NPC1 (PubMed:21866103, PubMed:32040508). NPC1-binding, Ca(2+) and acidic pH induce a conformational change of GP2, which unmasks its fusion peptide and permit membranes fusion (PubMed:21866103, PubMed:22031933, PubMed:32040508).</text>
</comment>
<comment type="function">
    <molecule>GP2</molecule>
    <text>Acts as a class I viral fusion protein. Under the current model, the protein has at least 3 conformational states: pre-fusion native state, pre-hairpin intermediate state, and post-fusion hairpin state. During viral and target cell membrane fusion, the coiled coil regions (heptad repeats) assume a trimer-of-hairpins structure, positioning the fusion peptide in close proximity to the C-terminal region of the ectodomain. The formation of this structure appears to drive apposition and subsequent fusion of viral and target cell membranes. Responsible for penetration of the virus into the cell cytoplasm by mediating the fusion of the membrane of the endocytosed virus particle with the endosomal membrane. Low pH in endosomes induces an irreversible conformational change in GP2, releasing the fusion hydrophobic peptide.</text>
</comment>
<comment type="subunit">
    <molecule>Envelope glycoprotein</molecule>
    <text evidence="8 11 13 14 16 20 26 27 28 34">Homotrimer; each monomer consists of a GP1 and a GP2 subunit linked by disulfide bonds (PubMed:35303429). The resulting peplomers (GP1,2) protrude from the virus surface as spikes. Interacts with host integrin alpha-V/ITGAV (PubMed:15596847). Interacts with host CLEC10A (PubMed:14990712). Also binds to host CD209 and CLEC4M/DC-SIGN(R) (PubMed:12050398, PubMed:12504546). Interacts with host FOLR1 (PubMed:11461707). Interacts with BST2; this interaction inhibits the antiviral effect of BST2 and this allows viral release from infected cells (PubMed:27707924). Interacts with host FCN1; this interaction enhances viral entry (PubMed:26984723). Interacts with host TLR4; this interaction induces cell death in T-lymphocytes or proinflammatory cytokines and SOCS1 production in monocytes (PubMed:19846529, PubMed:28542576).</text>
</comment>
<comment type="subunit">
    <molecule>GP1</molecule>
    <text evidence="21 33">Interacts with host entry receptor NPC1.</text>
</comment>
<comment type="subunit">
    <molecule>Shed GP</molecule>
    <text evidence="17">GP1 and GP2delta are part of GP1,2delta soluble complexes released by ectodomain shedding.</text>
</comment>
<comment type="interaction">
    <interactant intactId="EBI-16200230">
        <id>Q05320</id>
    </interactant>
    <interactant intactId="EBI-16200230">
        <id>Q05320</id>
        <label>GP</label>
    </interactant>
    <organismsDiffer>false</organismsDiffer>
    <experiments>3</experiments>
</comment>
<comment type="subcellular location">
    <molecule>GP2</molecule>
    <subcellularLocation>
        <location evidence="42">Virion membrane</location>
        <topology evidence="3">Single-pass type I membrane protein</topology>
    </subcellularLocation>
    <subcellularLocation>
        <location evidence="42">Host cell membrane</location>
        <topology evidence="3">Single-pass type I membrane protein</topology>
    </subcellularLocation>
    <text evidence="42">In the cell, localizes to the plasma membrane lipid rafts, which probably represent the assembly and budding site.</text>
</comment>
<comment type="subcellular location">
    <molecule>GP1</molecule>
    <subcellularLocation>
        <location evidence="42">Virion membrane</location>
        <topology>Peripheral membrane protein</topology>
    </subcellularLocation>
    <subcellularLocation>
        <location evidence="42">Host cell membrane</location>
        <topology evidence="37">Peripheral membrane protein</topology>
    </subcellularLocation>
    <text evidence="10 37">GP1 is not anchored to the viral envelope, but forms a disulfid-linked complex with the extravirion surface GP2 (PubMed:9576958). In the cell, both GP1 and GP2 localize to the plasma membrane lipid rafts, which probably represent the assembly and budding site (PubMed:11877482). GP1 can also be shed after proteolytic processing.</text>
</comment>
<comment type="subcellular location">
    <molecule>Shed GP</molecule>
    <subcellularLocation>
        <location evidence="15 23 32">Secreted</location>
    </subcellularLocation>
    <text evidence="15">GP2-delta bound to GP1 (GP1,2-delta) is produced by proteolytic cleavage of GP1,2 by host ADAM17 and shed by the virus.</text>
</comment>
<comment type="domain">
    <molecule>GP1</molecule>
    <text>The mucin-like region seems to be involved in the cytotoxic function. This region is also involved in binding to human CLEC10A.</text>
</comment>
<comment type="domain">
    <text>The coiled coil regions play a role in oligomerization and fusion activity.</text>
</comment>
<comment type="PTM">
    <text evidence="12">The signal peptide region modulates GP's high mannose glycosylation, thereby determining the efficiency of the interactions with DC-SIGN(R).</text>
</comment>
<comment type="PTM">
    <text evidence="12">N-glycosylated.</text>
</comment>
<comment type="PTM">
    <molecule>Shed GP</molecule>
    <text evidence="23">Glycosylated; glycosylation is essential for the activation of dendritic cells and macrophages.</text>
</comment>
<comment type="PTM">
    <molecule>GP1</molecule>
    <text evidence="12">O-glycosylated in the mucin-like region.</text>
</comment>
<comment type="PTM">
    <molecule>GP2</molecule>
    <text evidence="7">Palmitoylation is not required for its function.</text>
</comment>
<comment type="PTM">
    <text evidence="7 15 19 21 37 38 39">Specific enzymatic cleavages in vivo yield mature proteins. The precursor is processed into GP1 and GP2 by host cell furin in the trans Golgi, and maybe by other host proteases, to yield the mature GP1 and GP2 proteins (PubMed:9576958, PubMed:9614872, PubMed:9882347). The cleavage site corresponds to the furin optimal cleavage sequence [KR]-X-[KR]-R (PubMed:9576958). This cleavage does not seem to be required for function (PubMed:9576958). After the internalization of the virus into cell endosomes, GP1 C-terminus is removed by the endosomal proteases cathepsin B, cathepsin L, or both, leaving a 19-kDa N-terminal fragment which is further digested by cathepsin B (PubMed:16571833). This cleaved 19-kDa GP1 can then bind to the host entry receptor NPC1 (PubMed:21866103). Proteolytic processing of GP1,2 by host ADAM17 can remove the transmembrane anchor of GP2 and leads to shedding of complexes consisting in GP1 and truncated GP2 (GP1,2delta) (PubMed:15103332).</text>
</comment>
<comment type="RNA editing">
    <location>
        <position position="295" evidence="35 36"/>
    </location>
    <text>Partially edited. RNA editing at this position consists of an insertion of one or two adenine nucleotides. The sequence displayed here is the full-length transmembrane glycoprotein GP, derived from the +1A edited RNA. The unedited RNA gives rise to the small secreted glycoprotein sGP (AC P60170), the +2A edited RNA gives rise to the super small secreted glycoprotein ssGP (AC Q9YMG2).</text>
</comment>
<comment type="miscellaneous">
    <text>Filoviruses entry requires functional lipid rafts at the host cell surface.</text>
</comment>
<comment type="miscellaneous">
    <text>Essential for infectivity, as it is the sole viral protein expressed at the virion surface.</text>
</comment>
<comment type="similarity">
    <text evidence="40">Belongs to the filoviruses glycoprotein family.</text>
</comment>
<comment type="sequence caution" evidence="40">
    <conflict type="frameshift">
        <sequence resource="EMBL-CDS" id="AAA96744"/>
    </conflict>
</comment>
<name>VGP_EBOZM</name>
<protein>
    <recommendedName>
        <fullName>Envelope glycoprotein</fullName>
    </recommendedName>
    <alternativeName>
        <fullName>GP1,2</fullName>
        <shortName>GP</shortName>
    </alternativeName>
    <component>
        <recommendedName>
            <fullName>Shed GP</fullName>
        </recommendedName>
        <alternativeName>
            <fullName>GP1,2-delta</fullName>
        </alternativeName>
    </component>
    <component>
        <recommendedName>
            <fullName>GP1</fullName>
        </recommendedName>
    </component>
    <component>
        <recommendedName>
            <fullName>GP2</fullName>
        </recommendedName>
    </component>
</protein>
<dbReference type="EMBL" id="L11365">
    <property type="protein sequence ID" value="AAB81004.1"/>
    <property type="molecule type" value="Genomic_RNA"/>
</dbReference>
<dbReference type="EMBL" id="U31033">
    <property type="protein sequence ID" value="AAA96744.1"/>
    <property type="status" value="ALT_FRAME"/>
    <property type="molecule type" value="Genomic_RNA"/>
</dbReference>
<dbReference type="EMBL" id="U23187">
    <property type="protein sequence ID" value="AAC54887.1"/>
    <property type="molecule type" value="Genomic_RNA"/>
</dbReference>
<dbReference type="EMBL" id="AF272001">
    <property type="protein sequence ID" value="AAG40168.1"/>
    <property type="molecule type" value="Genomic_RNA"/>
</dbReference>
<dbReference type="EMBL" id="AY142960">
    <property type="protein sequence ID" value="AAN37507.1"/>
    <property type="molecule type" value="Genomic_RNA"/>
</dbReference>
<dbReference type="EMBL" id="AF086833">
    <property type="protein sequence ID" value="AAD14585.1"/>
    <property type="molecule type" value="Genomic_RNA"/>
</dbReference>
<dbReference type="EMBL" id="AF499101">
    <property type="protein sequence ID" value="AAM76034.1"/>
    <property type="molecule type" value="Genomic_RNA"/>
</dbReference>
<dbReference type="PIR" id="S23155">
    <property type="entry name" value="S23155"/>
</dbReference>
<dbReference type="RefSeq" id="NP_066246.1">
    <property type="nucleotide sequence ID" value="NC_002549.1"/>
</dbReference>
<dbReference type="PDB" id="2EBO">
    <property type="method" value="X-ray"/>
    <property type="resolution" value="1.90 A"/>
    <property type="chains" value="A/B/C=557-630"/>
</dbReference>
<dbReference type="PDB" id="2RLJ">
    <property type="method" value="NMR"/>
    <property type="chains" value="A=524-539"/>
</dbReference>
<dbReference type="PDB" id="3CSY">
    <property type="method" value="X-ray"/>
    <property type="resolution" value="3.40 A"/>
    <property type="chains" value="I/K/M/O=32-311, J/L/N/P=464-501"/>
</dbReference>
<dbReference type="PDB" id="5FHC">
    <property type="method" value="X-ray"/>
    <property type="resolution" value="6.70 A"/>
    <property type="chains" value="J=502-599, K=1-308, K=490-501"/>
</dbReference>
<dbReference type="PDB" id="5HJ3">
    <property type="method" value="X-ray"/>
    <property type="resolution" value="3.30 A"/>
    <property type="chains" value="C/G/K/O=32-194"/>
</dbReference>
<dbReference type="PDB" id="5JQ3">
    <property type="method" value="X-ray"/>
    <property type="resolution" value="2.23 A"/>
    <property type="chains" value="A=32-501, B=502-632"/>
</dbReference>
<dbReference type="PDB" id="5JQ7">
    <property type="method" value="X-ray"/>
    <property type="resolution" value="2.69 A"/>
    <property type="chains" value="A=32-501, B=502-632"/>
</dbReference>
<dbReference type="PDB" id="5JQB">
    <property type="method" value="X-ray"/>
    <property type="resolution" value="2.68 A"/>
    <property type="chains" value="A=32-501, B=502-632"/>
</dbReference>
<dbReference type="PDB" id="5KEL">
    <property type="method" value="EM"/>
    <property type="resolution" value="4.30 A"/>
    <property type="chains" value="A/E/F=33-501, B/G/I=502-637"/>
</dbReference>
<dbReference type="PDB" id="5KEM">
    <property type="method" value="EM"/>
    <property type="resolution" value="5.50 A"/>
    <property type="chains" value="A/F=53-284"/>
</dbReference>
<dbReference type="PDB" id="5KEN">
    <property type="method" value="EM"/>
    <property type="resolution" value="4.30 A"/>
    <property type="chains" value="A/E/K=33-308, B/F/M=503-615"/>
</dbReference>
<dbReference type="PDB" id="6EA7">
    <property type="method" value="X-ray"/>
    <property type="resolution" value="4.25 A"/>
    <property type="chains" value="A/C/E=32-194, B/D/F=502-612"/>
</dbReference>
<dbReference type="PDB" id="6EAY">
    <property type="method" value="X-ray"/>
    <property type="resolution" value="3.72 A"/>
    <property type="chains" value="A=502-637, B=32-336"/>
</dbReference>
<dbReference type="PDB" id="6F5U">
    <property type="method" value="X-ray"/>
    <property type="resolution" value="2.07 A"/>
    <property type="chains" value="A=32-312, B=502-632"/>
</dbReference>
<dbReference type="PDB" id="6F6I">
    <property type="method" value="X-ray"/>
    <property type="resolution" value="2.40 A"/>
    <property type="chains" value="A=32-336, B=502-632"/>
</dbReference>
<dbReference type="PDB" id="6F6N">
    <property type="method" value="X-ray"/>
    <property type="resolution" value="2.15 A"/>
    <property type="chains" value="A=32-336"/>
</dbReference>
<dbReference type="PDB" id="6F6S">
    <property type="method" value="X-ray"/>
    <property type="resolution" value="2.29 A"/>
    <property type="chains" value="A=32-336"/>
</dbReference>
<dbReference type="PDB" id="6G95">
    <property type="method" value="X-ray"/>
    <property type="resolution" value="2.31 A"/>
    <property type="chains" value="A=32-311, B=502-632"/>
</dbReference>
<dbReference type="PDB" id="6G9B">
    <property type="method" value="X-ray"/>
    <property type="resolution" value="2.26 A"/>
    <property type="chains" value="A=32-311, B=502-632"/>
</dbReference>
<dbReference type="PDB" id="6G9I">
    <property type="method" value="X-ray"/>
    <property type="resolution" value="2.19 A"/>
    <property type="chains" value="A=32-311, B=502-632"/>
</dbReference>
<dbReference type="PDB" id="6HRO">
    <property type="method" value="X-ray"/>
    <property type="resolution" value="2.30 A"/>
    <property type="chains" value="A=32-312, B=502-632"/>
</dbReference>
<dbReference type="PDB" id="6HS4">
    <property type="method" value="X-ray"/>
    <property type="resolution" value="2.05 A"/>
    <property type="chains" value="A=32-311, B=502-632"/>
</dbReference>
<dbReference type="PDB" id="6MAM">
    <property type="method" value="X-ray"/>
    <property type="resolution" value="4.10 A"/>
    <property type="chains" value="G/I/K=32-226, H/J/L=502-611"/>
</dbReference>
<dbReference type="PDB" id="6NAE">
    <property type="method" value="X-ray"/>
    <property type="resolution" value="2.75 A"/>
    <property type="chains" value="A=32-336, B=502-632"/>
</dbReference>
<dbReference type="PDB" id="6OZ9">
    <property type="method" value="X-ray"/>
    <property type="resolution" value="3.46 A"/>
    <property type="chains" value="A=32-188, B=503-615"/>
</dbReference>
<dbReference type="PDB" id="6QD7">
    <property type="method" value="EM"/>
    <property type="resolution" value="3.10 A"/>
    <property type="chains" value="A/C/E=32-311, B/D/F=502-632"/>
</dbReference>
<dbReference type="PDB" id="6QD8">
    <property type="method" value="EM"/>
    <property type="resolution" value="3.30 A"/>
    <property type="chains" value="A/C/E=32-311, B/D/F=502-632"/>
</dbReference>
<dbReference type="PDB" id="6S8D">
    <property type="method" value="EM"/>
    <property type="resolution" value="3.49 A"/>
    <property type="chains" value="A/C/E=32-334, B/D/F=502-632"/>
</dbReference>
<dbReference type="PDB" id="6S8I">
    <property type="method" value="EM"/>
    <property type="resolution" value="2.99 A"/>
    <property type="chains" value="A/C/E=32-336, B/D/F=502-632"/>
</dbReference>
<dbReference type="PDB" id="6S8J">
    <property type="method" value="EM"/>
    <property type="resolution" value="2.91 A"/>
    <property type="chains" value="A/C/E=32-336, B/D/F=502-632"/>
</dbReference>
<dbReference type="PDB" id="6VKM">
    <property type="method" value="X-ray"/>
    <property type="resolution" value="3.50 A"/>
    <property type="chains" value="A=1-647"/>
</dbReference>
<dbReference type="PDB" id="7JPH">
    <property type="method" value="X-ray"/>
    <property type="resolution" value="3.19 A"/>
    <property type="chains" value="B=502-637"/>
</dbReference>
<dbReference type="PDB" id="7JPI">
    <property type="method" value="X-ray"/>
    <property type="resolution" value="2.28 A"/>
    <property type="chains" value="B=502-637"/>
</dbReference>
<dbReference type="PDB" id="7KEJ">
    <property type="method" value="EM"/>
    <property type="resolution" value="3.80 A"/>
    <property type="chains" value="A/B/C=32-309, D/E/F=461-633"/>
</dbReference>
<dbReference type="PDB" id="7KEX">
    <property type="method" value="EM"/>
    <property type="resolution" value="4.25 A"/>
    <property type="chains" value="A/B/C=32-309, D/E/F=461-629"/>
</dbReference>
<dbReference type="PDB" id="7KF9">
    <property type="method" value="EM"/>
    <property type="resolution" value="4.40 A"/>
    <property type="chains" value="A/B/C=32-309, D/E/F=461-629"/>
</dbReference>
<dbReference type="PDB" id="7KFB">
    <property type="method" value="EM"/>
    <property type="resolution" value="3.90 A"/>
    <property type="chains" value="A/B/C=32-309, D/E/F=461-629"/>
</dbReference>
<dbReference type="PDB" id="7KFH">
    <property type="method" value="EM"/>
    <property type="resolution" value="3.80 A"/>
    <property type="chains" value="A/B/C=32-309, D/E/F=461-629"/>
</dbReference>
<dbReference type="PDB" id="7LYD">
    <property type="method" value="X-ray"/>
    <property type="resolution" value="2.35 A"/>
    <property type="chains" value="A=32-318, B=502-632"/>
</dbReference>
<dbReference type="PDB" id="7LYY">
    <property type="method" value="X-ray"/>
    <property type="resolution" value="2.75 A"/>
    <property type="chains" value="A=32-317, B=502-632"/>
</dbReference>
<dbReference type="PDB" id="7M2D">
    <property type="method" value="X-ray"/>
    <property type="resolution" value="2.70 A"/>
    <property type="chains" value="A=32-317, B=502-632"/>
</dbReference>
<dbReference type="PDB" id="7M8L">
    <property type="method" value="EM"/>
    <property type="resolution" value="3.90 A"/>
    <property type="chains" value="A/B/C=32-309, D/E/F=461-629"/>
</dbReference>
<dbReference type="PDB" id="7SSQ">
    <property type="method" value="X-ray"/>
    <property type="resolution" value="2.25 A"/>
    <property type="chains" value="A=32-336, B=502-632"/>
</dbReference>
<dbReference type="PDB" id="7SSR">
    <property type="method" value="X-ray"/>
    <property type="resolution" value="2.50 A"/>
    <property type="chains" value="A=32-336, B=502-632"/>
</dbReference>
<dbReference type="PDB" id="7SWD">
    <property type="method" value="EM"/>
    <property type="resolution" value="3.59 A"/>
    <property type="chains" value="A/C/E=33-188, B/D/F=504-599"/>
</dbReference>
<dbReference type="PDB" id="7TN9">
    <property type="method" value="EM"/>
    <property type="resolution" value="3.10 A"/>
    <property type="chains" value="S/T/U=32-311, V/W/X=503-637"/>
</dbReference>
<dbReference type="PDB" id="8DPL">
    <property type="method" value="EM"/>
    <property type="resolution" value="2.53 A"/>
    <property type="chains" value="D/I/M=33-312"/>
</dbReference>
<dbReference type="PDB" id="8DPM">
    <property type="method" value="EM"/>
    <property type="resolution" value="3.00 A"/>
    <property type="chains" value="A/F/K=33-312"/>
</dbReference>
<dbReference type="PDB" id="8F87">
    <property type="method" value="X-ray"/>
    <property type="resolution" value="2.60 A"/>
    <property type="chains" value="A=32-318, B=502-632"/>
</dbReference>
<dbReference type="PDB" id="9BSU">
    <property type="method" value="EM"/>
    <property type="resolution" value="3.36 A"/>
    <property type="chains" value="A/B/C=1-676"/>
</dbReference>
<dbReference type="PDB" id="9BSV">
    <property type="method" value="EM"/>
    <property type="resolution" value="3.10 A"/>
    <property type="chains" value="A/B/C=1-676"/>
</dbReference>
<dbReference type="PDBsum" id="2EBO"/>
<dbReference type="PDBsum" id="2RLJ"/>
<dbReference type="PDBsum" id="3CSY"/>
<dbReference type="PDBsum" id="5FHC"/>
<dbReference type="PDBsum" id="5HJ3"/>
<dbReference type="PDBsum" id="5JQ3"/>
<dbReference type="PDBsum" id="5JQ7"/>
<dbReference type="PDBsum" id="5JQB"/>
<dbReference type="PDBsum" id="5KEL"/>
<dbReference type="PDBsum" id="5KEM"/>
<dbReference type="PDBsum" id="5KEN"/>
<dbReference type="PDBsum" id="6EA7"/>
<dbReference type="PDBsum" id="6EAY"/>
<dbReference type="PDBsum" id="6F5U"/>
<dbReference type="PDBsum" id="6F6I"/>
<dbReference type="PDBsum" id="6F6N"/>
<dbReference type="PDBsum" id="6F6S"/>
<dbReference type="PDBsum" id="6G95"/>
<dbReference type="PDBsum" id="6G9B"/>
<dbReference type="PDBsum" id="6G9I"/>
<dbReference type="PDBsum" id="6HRO"/>
<dbReference type="PDBsum" id="6HS4"/>
<dbReference type="PDBsum" id="6MAM"/>
<dbReference type="PDBsum" id="6NAE"/>
<dbReference type="PDBsum" id="6OZ9"/>
<dbReference type="PDBsum" id="6QD7"/>
<dbReference type="PDBsum" id="6QD8"/>
<dbReference type="PDBsum" id="6S8D"/>
<dbReference type="PDBsum" id="6S8I"/>
<dbReference type="PDBsum" id="6S8J"/>
<dbReference type="PDBsum" id="6VKM"/>
<dbReference type="PDBsum" id="7JPH"/>
<dbReference type="PDBsum" id="7JPI"/>
<dbReference type="PDBsum" id="7KEJ"/>
<dbReference type="PDBsum" id="7KEX"/>
<dbReference type="PDBsum" id="7KF9"/>
<dbReference type="PDBsum" id="7KFB"/>
<dbReference type="PDBsum" id="7KFH"/>
<dbReference type="PDBsum" id="7LYD"/>
<dbReference type="PDBsum" id="7LYY"/>
<dbReference type="PDBsum" id="7M2D"/>
<dbReference type="PDBsum" id="7M8L"/>
<dbReference type="PDBsum" id="7SSQ"/>
<dbReference type="PDBsum" id="7SSR"/>
<dbReference type="PDBsum" id="7SWD"/>
<dbReference type="PDBsum" id="7TN9"/>
<dbReference type="PDBsum" id="8DPL"/>
<dbReference type="PDBsum" id="8DPM"/>
<dbReference type="PDBsum" id="8F87"/>
<dbReference type="PDBsum" id="9BSU"/>
<dbReference type="PDBsum" id="9BSV"/>
<dbReference type="BMRB" id="Q05320"/>
<dbReference type="EMDB" id="EMD-10124"/>
<dbReference type="EMDB" id="EMD-11665"/>
<dbReference type="EMDB" id="EMD-26005"/>
<dbReference type="EMDB" id="EMD-27637"/>
<dbReference type="EMDB" id="EMD-27638"/>
<dbReference type="EMDB" id="EMD-3310"/>
<dbReference type="EMDB" id="EMD-3311"/>
<dbReference type="EMDB" id="EMD-44872"/>
<dbReference type="EMDB" id="EMD-44873"/>
<dbReference type="EMDB" id="EMD-4520"/>
<dbReference type="EMDB" id="EMD-4521"/>
<dbReference type="EMDB" id="EMD-8240"/>
<dbReference type="EMDB" id="EMD-8241"/>
<dbReference type="EMDB" id="EMD-8242"/>
<dbReference type="SMR" id="Q05320"/>
<dbReference type="DIP" id="DIP-62002N"/>
<dbReference type="ELM" id="Q05320"/>
<dbReference type="IntAct" id="Q05320">
    <property type="interactions" value="1"/>
</dbReference>
<dbReference type="BindingDB" id="Q05320"/>
<dbReference type="ChEMBL" id="CHEMBL4105829"/>
<dbReference type="DrugBank" id="DB16385">
    <property type="generic name" value="Ansuvimab"/>
</dbReference>
<dbReference type="DrugBank" id="DB15898">
    <property type="generic name" value="Atoltivimab"/>
</dbReference>
<dbReference type="DrugBank" id="DB15899">
    <property type="generic name" value="Maftivimab"/>
</dbReference>
<dbReference type="DrugBank" id="DB15900">
    <property type="generic name" value="Odesivimab"/>
</dbReference>
<dbReference type="DrugCentral" id="Q05320"/>
<dbReference type="TCDB" id="1.G.12.2.2">
    <property type="family name" value="the avian leukosis virus gp95 fusion protein (alv-gp95) family"/>
</dbReference>
<dbReference type="GlyCosmos" id="Q05320">
    <property type="glycosylation" value="17 sites, No reported glycans"/>
</dbReference>
<dbReference type="ABCD" id="Q05320">
    <property type="antibodies" value="59 sequenced antibodies"/>
</dbReference>
<dbReference type="DNASU" id="911829"/>
<dbReference type="GeneID" id="911829"/>
<dbReference type="KEGG" id="vg:911829"/>
<dbReference type="EvolutionaryTrace" id="Q05320"/>
<dbReference type="Proteomes" id="UP000007209">
    <property type="component" value="Genome"/>
</dbReference>
<dbReference type="Proteomes" id="UP000109874">
    <property type="component" value="Genome"/>
</dbReference>
<dbReference type="Proteomes" id="UP000149419">
    <property type="component" value="Genome"/>
</dbReference>
<dbReference type="Proteomes" id="UP000150973">
    <property type="component" value="Genome"/>
</dbReference>
<dbReference type="Proteomes" id="UP000180447">
    <property type="component" value="Genome"/>
</dbReference>
<dbReference type="GO" id="GO:0005576">
    <property type="term" value="C:extracellular region"/>
    <property type="evidence" value="ECO:0007669"/>
    <property type="project" value="UniProtKB-SubCell"/>
</dbReference>
<dbReference type="GO" id="GO:0030430">
    <property type="term" value="C:host cell cytoplasm"/>
    <property type="evidence" value="ECO:0000314"/>
    <property type="project" value="CACAO"/>
</dbReference>
<dbReference type="GO" id="GO:0044165">
    <property type="term" value="C:host cell endoplasmic reticulum"/>
    <property type="evidence" value="ECO:0000315"/>
    <property type="project" value="CACAO"/>
</dbReference>
<dbReference type="GO" id="GO:0020002">
    <property type="term" value="C:host cell plasma membrane"/>
    <property type="evidence" value="ECO:0007669"/>
    <property type="project" value="UniProtKB-SubCell"/>
</dbReference>
<dbReference type="GO" id="GO:0045121">
    <property type="term" value="C:membrane raft"/>
    <property type="evidence" value="ECO:0000314"/>
    <property type="project" value="CACAO"/>
</dbReference>
<dbReference type="GO" id="GO:0019031">
    <property type="term" value="C:viral envelope"/>
    <property type="evidence" value="ECO:0007669"/>
    <property type="project" value="UniProtKB-KW"/>
</dbReference>
<dbReference type="GO" id="GO:0055036">
    <property type="term" value="C:virion membrane"/>
    <property type="evidence" value="ECO:0007669"/>
    <property type="project" value="UniProtKB-SubCell"/>
</dbReference>
<dbReference type="GO" id="GO:0042802">
    <property type="term" value="F:identical protein binding"/>
    <property type="evidence" value="ECO:0000353"/>
    <property type="project" value="IntAct"/>
</dbReference>
<dbReference type="GO" id="GO:0008289">
    <property type="term" value="F:lipid binding"/>
    <property type="evidence" value="ECO:0000314"/>
    <property type="project" value="DisProt"/>
</dbReference>
<dbReference type="GO" id="GO:0075512">
    <property type="term" value="P:clathrin-dependent endocytosis of virus by host cell"/>
    <property type="evidence" value="ECO:0007669"/>
    <property type="project" value="UniProtKB-KW"/>
</dbReference>
<dbReference type="GO" id="GO:0098670">
    <property type="term" value="P:entry receptor-mediated virion attachment to host cell"/>
    <property type="evidence" value="ECO:0007669"/>
    <property type="project" value="UniProtKB-KW"/>
</dbReference>
<dbReference type="GO" id="GO:0039654">
    <property type="term" value="P:fusion of virus membrane with host endosome membrane"/>
    <property type="evidence" value="ECO:0007669"/>
    <property type="project" value="UniProtKB-KW"/>
</dbReference>
<dbReference type="GO" id="GO:0046718">
    <property type="term" value="P:symbiont entry into host cell"/>
    <property type="evidence" value="ECO:0000314"/>
    <property type="project" value="DisProt"/>
</dbReference>
<dbReference type="GO" id="GO:0001907">
    <property type="term" value="P:symbiont-mediated killing of host cell"/>
    <property type="evidence" value="ECO:0000269"/>
    <property type="project" value="SigSci"/>
</dbReference>
<dbReference type="GO" id="GO:0052170">
    <property type="term" value="P:symbiont-mediated suppression of host innate immune response"/>
    <property type="evidence" value="ECO:0007669"/>
    <property type="project" value="UniProtKB-KW"/>
</dbReference>
<dbReference type="GO" id="GO:0039587">
    <property type="term" value="P:symbiont-mediated-mediated suppression of host tetherin activity"/>
    <property type="evidence" value="ECO:0007669"/>
    <property type="project" value="UniProtKB-KW"/>
</dbReference>
<dbReference type="GO" id="GO:0046761">
    <property type="term" value="P:viral budding from plasma membrane"/>
    <property type="evidence" value="ECO:0000314"/>
    <property type="project" value="CACAO"/>
</dbReference>
<dbReference type="CDD" id="cd09850">
    <property type="entry name" value="Ebola-like_HR1-HR2"/>
    <property type="match status" value="1"/>
</dbReference>
<dbReference type="FunFam" id="1.10.287.210:FF:000003">
    <property type="entry name" value="Envelope glycoprotein"/>
    <property type="match status" value="1"/>
</dbReference>
<dbReference type="Gene3D" id="1.10.287.210">
    <property type="match status" value="1"/>
</dbReference>
<dbReference type="InterPro" id="IPR054584">
    <property type="entry name" value="Ebola-like_HR1-HR2"/>
</dbReference>
<dbReference type="InterPro" id="IPR014625">
    <property type="entry name" value="GPC_FiloV"/>
</dbReference>
<dbReference type="InterPro" id="IPR002561">
    <property type="entry name" value="GPC_filovir-type_extra_dom"/>
</dbReference>
<dbReference type="Pfam" id="PF22307">
    <property type="entry name" value="Ebola-like_HR1-HR2"/>
    <property type="match status" value="1"/>
</dbReference>
<dbReference type="Pfam" id="PF01611">
    <property type="entry name" value="Filo_glycop"/>
    <property type="match status" value="1"/>
</dbReference>
<dbReference type="PIRSF" id="PIRSF036874">
    <property type="entry name" value="GPC_FiloV"/>
    <property type="match status" value="1"/>
</dbReference>
<dbReference type="SUPFAM" id="SSF58069">
    <property type="entry name" value="Virus ectodomain"/>
    <property type="match status" value="1"/>
</dbReference>